<name>CGAS_MOUSE</name>
<accession>Q8C6L5</accession>
<accession>Q3ULW3</accession>
<proteinExistence type="evidence at protein level"/>
<reference key="1">
    <citation type="journal article" date="2013" name="Science">
        <title>Cyclic GMP-AMP synthase is a cytosolic DNA sensor that activates the type I interferon pathway.</title>
        <authorList>
            <person name="Sun L."/>
            <person name="Wu J."/>
            <person name="Du F."/>
            <person name="Chen X."/>
            <person name="Chen Z.J."/>
        </authorList>
    </citation>
    <scope>NUCLEOTIDE SEQUENCE [MRNA]</scope>
    <scope>FUNCTION</scope>
    <scope>DNA-BINDING</scope>
    <scope>SUBCELLULAR LOCATION</scope>
    <scope>MUTAGENESIS OF GLU-211 AND ASP-213</scope>
</reference>
<reference key="2">
    <citation type="journal article" date="2005" name="Science">
        <title>The transcriptional landscape of the mammalian genome.</title>
        <authorList>
            <person name="Carninci P."/>
            <person name="Kasukawa T."/>
            <person name="Katayama S."/>
            <person name="Gough J."/>
            <person name="Frith M.C."/>
            <person name="Maeda N."/>
            <person name="Oyama R."/>
            <person name="Ravasi T."/>
            <person name="Lenhard B."/>
            <person name="Wells C."/>
            <person name="Kodzius R."/>
            <person name="Shimokawa K."/>
            <person name="Bajic V.B."/>
            <person name="Brenner S.E."/>
            <person name="Batalov S."/>
            <person name="Forrest A.R."/>
            <person name="Zavolan M."/>
            <person name="Davis M.J."/>
            <person name="Wilming L.G."/>
            <person name="Aidinis V."/>
            <person name="Allen J.E."/>
            <person name="Ambesi-Impiombato A."/>
            <person name="Apweiler R."/>
            <person name="Aturaliya R.N."/>
            <person name="Bailey T.L."/>
            <person name="Bansal M."/>
            <person name="Baxter L."/>
            <person name="Beisel K.W."/>
            <person name="Bersano T."/>
            <person name="Bono H."/>
            <person name="Chalk A.M."/>
            <person name="Chiu K.P."/>
            <person name="Choudhary V."/>
            <person name="Christoffels A."/>
            <person name="Clutterbuck D.R."/>
            <person name="Crowe M.L."/>
            <person name="Dalla E."/>
            <person name="Dalrymple B.P."/>
            <person name="de Bono B."/>
            <person name="Della Gatta G."/>
            <person name="di Bernardo D."/>
            <person name="Down T."/>
            <person name="Engstrom P."/>
            <person name="Fagiolini M."/>
            <person name="Faulkner G."/>
            <person name="Fletcher C.F."/>
            <person name="Fukushima T."/>
            <person name="Furuno M."/>
            <person name="Futaki S."/>
            <person name="Gariboldi M."/>
            <person name="Georgii-Hemming P."/>
            <person name="Gingeras T.R."/>
            <person name="Gojobori T."/>
            <person name="Green R.E."/>
            <person name="Gustincich S."/>
            <person name="Harbers M."/>
            <person name="Hayashi Y."/>
            <person name="Hensch T.K."/>
            <person name="Hirokawa N."/>
            <person name="Hill D."/>
            <person name="Huminiecki L."/>
            <person name="Iacono M."/>
            <person name="Ikeo K."/>
            <person name="Iwama A."/>
            <person name="Ishikawa T."/>
            <person name="Jakt M."/>
            <person name="Kanapin A."/>
            <person name="Katoh M."/>
            <person name="Kawasawa Y."/>
            <person name="Kelso J."/>
            <person name="Kitamura H."/>
            <person name="Kitano H."/>
            <person name="Kollias G."/>
            <person name="Krishnan S.P."/>
            <person name="Kruger A."/>
            <person name="Kummerfeld S.K."/>
            <person name="Kurochkin I.V."/>
            <person name="Lareau L.F."/>
            <person name="Lazarevic D."/>
            <person name="Lipovich L."/>
            <person name="Liu J."/>
            <person name="Liuni S."/>
            <person name="McWilliam S."/>
            <person name="Madan Babu M."/>
            <person name="Madera M."/>
            <person name="Marchionni L."/>
            <person name="Matsuda H."/>
            <person name="Matsuzawa S."/>
            <person name="Miki H."/>
            <person name="Mignone F."/>
            <person name="Miyake S."/>
            <person name="Morris K."/>
            <person name="Mottagui-Tabar S."/>
            <person name="Mulder N."/>
            <person name="Nakano N."/>
            <person name="Nakauchi H."/>
            <person name="Ng P."/>
            <person name="Nilsson R."/>
            <person name="Nishiguchi S."/>
            <person name="Nishikawa S."/>
            <person name="Nori F."/>
            <person name="Ohara O."/>
            <person name="Okazaki Y."/>
            <person name="Orlando V."/>
            <person name="Pang K.C."/>
            <person name="Pavan W.J."/>
            <person name="Pavesi G."/>
            <person name="Pesole G."/>
            <person name="Petrovsky N."/>
            <person name="Piazza S."/>
            <person name="Reed J."/>
            <person name="Reid J.F."/>
            <person name="Ring B.Z."/>
            <person name="Ringwald M."/>
            <person name="Rost B."/>
            <person name="Ruan Y."/>
            <person name="Salzberg S.L."/>
            <person name="Sandelin A."/>
            <person name="Schneider C."/>
            <person name="Schoenbach C."/>
            <person name="Sekiguchi K."/>
            <person name="Semple C.A."/>
            <person name="Seno S."/>
            <person name="Sessa L."/>
            <person name="Sheng Y."/>
            <person name="Shibata Y."/>
            <person name="Shimada H."/>
            <person name="Shimada K."/>
            <person name="Silva D."/>
            <person name="Sinclair B."/>
            <person name="Sperling S."/>
            <person name="Stupka E."/>
            <person name="Sugiura K."/>
            <person name="Sultana R."/>
            <person name="Takenaka Y."/>
            <person name="Taki K."/>
            <person name="Tammoja K."/>
            <person name="Tan S.L."/>
            <person name="Tang S."/>
            <person name="Taylor M.S."/>
            <person name="Tegner J."/>
            <person name="Teichmann S.A."/>
            <person name="Ueda H.R."/>
            <person name="van Nimwegen E."/>
            <person name="Verardo R."/>
            <person name="Wei C.L."/>
            <person name="Yagi K."/>
            <person name="Yamanishi H."/>
            <person name="Zabarovsky E."/>
            <person name="Zhu S."/>
            <person name="Zimmer A."/>
            <person name="Hide W."/>
            <person name="Bult C."/>
            <person name="Grimmond S.M."/>
            <person name="Teasdale R.D."/>
            <person name="Liu E.T."/>
            <person name="Brusic V."/>
            <person name="Quackenbush J."/>
            <person name="Wahlestedt C."/>
            <person name="Mattick J.S."/>
            <person name="Hume D.A."/>
            <person name="Kai C."/>
            <person name="Sasaki D."/>
            <person name="Tomaru Y."/>
            <person name="Fukuda S."/>
            <person name="Kanamori-Katayama M."/>
            <person name="Suzuki M."/>
            <person name="Aoki J."/>
            <person name="Arakawa T."/>
            <person name="Iida J."/>
            <person name="Imamura K."/>
            <person name="Itoh M."/>
            <person name="Kato T."/>
            <person name="Kawaji H."/>
            <person name="Kawagashira N."/>
            <person name="Kawashima T."/>
            <person name="Kojima M."/>
            <person name="Kondo S."/>
            <person name="Konno H."/>
            <person name="Nakano K."/>
            <person name="Ninomiya N."/>
            <person name="Nishio T."/>
            <person name="Okada M."/>
            <person name="Plessy C."/>
            <person name="Shibata K."/>
            <person name="Shiraki T."/>
            <person name="Suzuki S."/>
            <person name="Tagami M."/>
            <person name="Waki K."/>
            <person name="Watahiki A."/>
            <person name="Okamura-Oho Y."/>
            <person name="Suzuki H."/>
            <person name="Kawai J."/>
            <person name="Hayashizaki Y."/>
        </authorList>
    </citation>
    <scope>NUCLEOTIDE SEQUENCE [LARGE SCALE MRNA]</scope>
    <source>
        <strain>C57BL/6J</strain>
        <tissue>Mammary gland</tissue>
        <tissue>Ovary</tissue>
    </source>
</reference>
<reference key="3">
    <citation type="journal article" date="2009" name="PLoS Biol.">
        <title>Lineage-specific biology revealed by a finished genome assembly of the mouse.</title>
        <authorList>
            <person name="Church D.M."/>
            <person name="Goodstadt L."/>
            <person name="Hillier L.W."/>
            <person name="Zody M.C."/>
            <person name="Goldstein S."/>
            <person name="She X."/>
            <person name="Bult C.J."/>
            <person name="Agarwala R."/>
            <person name="Cherry J.L."/>
            <person name="DiCuccio M."/>
            <person name="Hlavina W."/>
            <person name="Kapustin Y."/>
            <person name="Meric P."/>
            <person name="Maglott D."/>
            <person name="Birtle Z."/>
            <person name="Marques A.C."/>
            <person name="Graves T."/>
            <person name="Zhou S."/>
            <person name="Teague B."/>
            <person name="Potamousis K."/>
            <person name="Churas C."/>
            <person name="Place M."/>
            <person name="Herschleb J."/>
            <person name="Runnheim R."/>
            <person name="Forrest D."/>
            <person name="Amos-Landgraf J."/>
            <person name="Schwartz D.C."/>
            <person name="Cheng Z."/>
            <person name="Lindblad-Toh K."/>
            <person name="Eichler E.E."/>
            <person name="Ponting C.P."/>
        </authorList>
    </citation>
    <scope>NUCLEOTIDE SEQUENCE [LARGE SCALE GENOMIC DNA]</scope>
    <source>
        <strain>C57BL/6J</strain>
    </source>
</reference>
<reference key="4">
    <citation type="submission" date="2005-07" db="EMBL/GenBank/DDBJ databases">
        <authorList>
            <person name="Mural R.J."/>
            <person name="Adams M.D."/>
            <person name="Myers E.W."/>
            <person name="Smith H.O."/>
            <person name="Venter J.C."/>
        </authorList>
    </citation>
    <scope>NUCLEOTIDE SEQUENCE [LARGE SCALE GENOMIC DNA]</scope>
</reference>
<reference key="5">
    <citation type="journal article" date="2004" name="Genome Res.">
        <title>The status, quality, and expansion of the NIH full-length cDNA project: the Mammalian Gene Collection (MGC).</title>
        <authorList>
            <consortium name="The MGC Project Team"/>
        </authorList>
    </citation>
    <scope>NUCLEOTIDE SEQUENCE [LARGE SCALE MRNA]</scope>
    <source>
        <tissue>Brain</tissue>
        <tissue>Limb</tissue>
    </source>
</reference>
<reference key="6">
    <citation type="journal article" date="2013" name="Nature">
        <title>cGAS produces a 2'-5'-linked cyclic dinucleotide second messenger that activates STING.</title>
        <authorList>
            <person name="Ablasser A."/>
            <person name="Goldeck M."/>
            <person name="Cavlar T."/>
            <person name="Deimling T."/>
            <person name="Witte G."/>
            <person name="Rohl I."/>
            <person name="Hopfner K.P."/>
            <person name="Ludwig J."/>
            <person name="Hornung V."/>
        </authorList>
    </citation>
    <scope>FUNCTION</scope>
</reference>
<reference key="7">
    <citation type="journal article" date="2013" name="Nature">
        <title>Cell intrinsic immunity spreads to bystander cells via the intercellular transfer of cGAMP.</title>
        <authorList>
            <person name="Ablasser A."/>
            <person name="Schmid-Burgk J.L."/>
            <person name="Hemmerling I."/>
            <person name="Horvath G.L."/>
            <person name="Schmidt T."/>
            <person name="Latz E."/>
            <person name="Hornung V."/>
        </authorList>
    </citation>
    <scope>FUNCTION</scope>
</reference>
<reference key="8">
    <citation type="journal article" date="2013" name="Science">
        <title>Cyclic GMP-AMP synthase is an innate immune sensor of HIV and other retroviruses.</title>
        <authorList>
            <person name="Gao D."/>
            <person name="Wu J."/>
            <person name="Wu Y.T."/>
            <person name="Du F."/>
            <person name="Aroh C."/>
            <person name="Yan N."/>
            <person name="Sun L."/>
            <person name="Chen Z.J."/>
        </authorList>
    </citation>
    <scope>FUNCTION</scope>
</reference>
<reference key="9">
    <citation type="journal article" date="2014" name="Cell">
        <title>Apoptotic caspases suppress mtDNA-induced STING-mediated type I IFN production.</title>
        <authorList>
            <person name="White M.J."/>
            <person name="McArthur K."/>
            <person name="Metcalf D."/>
            <person name="Lane R.M."/>
            <person name="Cambier J.C."/>
            <person name="Herold M.J."/>
            <person name="van Delft M.F."/>
            <person name="Bedoui S."/>
            <person name="Lessene G."/>
            <person name="Ritchie M.E."/>
            <person name="Huang D.C."/>
            <person name="Kile B.T."/>
        </authorList>
    </citation>
    <scope>PROTEOLYTIC CLEAVAGE</scope>
</reference>
<reference key="10">
    <citation type="journal article" date="2015" name="Cell Rep.">
        <title>Akt kinase-mediated checkpoint of cGAS DNA sensing pathway.</title>
        <authorList>
            <person name="Seo G.J."/>
            <person name="Yang A."/>
            <person name="Tan B."/>
            <person name="Kim S."/>
            <person name="Liang Q."/>
            <person name="Choi Y."/>
            <person name="Yuan W."/>
            <person name="Feng P."/>
            <person name="Park H.S."/>
            <person name="Jung J.U."/>
        </authorList>
    </citation>
    <scope>PHOSPHORYLATION AT SER-291</scope>
    <scope>ACTIVITY REGULATION</scope>
    <scope>MUTAGENESIS OF SER-291</scope>
</reference>
<reference key="11">
    <citation type="journal article" date="2015" name="Science">
        <title>Viruses transfer the antiviral second messenger cGAMP between cells.</title>
        <authorList>
            <person name="Bridgeman A."/>
            <person name="Maelfait J."/>
            <person name="Davenne T."/>
            <person name="Partridge T."/>
            <person name="Peng Y."/>
            <person name="Mayer A."/>
            <person name="Dong T."/>
            <person name="Kaever V."/>
            <person name="Borrow P."/>
            <person name="Rehwinkel J."/>
        </authorList>
    </citation>
    <scope>FUNCTION</scope>
    <scope>MUTAGENESIS OF GLY-198 AND SER-199</scope>
</reference>
<reference key="12">
    <citation type="journal article" date="2016" name="Immunity">
        <title>Sumoylation promotes the stability of the DNA sensor cGAS and the adaptor STING to regulate the kinetics of response to DNA virus.</title>
        <authorList>
            <person name="Hu M.M."/>
            <person name="Yang Q."/>
            <person name="Xie X.Q."/>
            <person name="Liao C.Y."/>
            <person name="Lin H."/>
            <person name="Liu T.T."/>
            <person name="Yin L."/>
            <person name="Shu H.B."/>
        </authorList>
    </citation>
    <scope>SUMOYLATION AT LYS-217 AND LYS-464</scope>
    <scope>UBIQUITINATION AT LYS-271 AND LYS-464</scope>
    <scope>MUTAGENESIS OF LYS-217; LYS-271; LYS-335 AND LYS-464</scope>
</reference>
<reference key="13">
    <citation type="journal article" date="2016" name="Nat. Immunol.">
        <title>Glutamylation of the DNA sensor cGAS regulates its binding and synthase activity in antiviral immunity.</title>
        <authorList>
            <person name="Xia P."/>
            <person name="Ye B."/>
            <person name="Wang S."/>
            <person name="Zhu X."/>
            <person name="Du Y."/>
            <person name="Xiong Z."/>
            <person name="Tian Y."/>
            <person name="Fan Z."/>
        </authorList>
    </citation>
    <scope>GLUTAMYLATION AT GLU-272</scope>
    <scope>GLUTAMYLATION AT GLU-302</scope>
    <scope>MUTAGENESIS OF GLU-272 AND GLU-302</scope>
</reference>
<reference key="14">
    <citation type="journal article" date="2017" name="FEBS Lett.">
        <title>The N terminus of cGAS de-oligomerizes the cGAS:DNA complex and lifts the DNA size restriction of core-cGAS activity.</title>
        <authorList>
            <person name="Lee A."/>
            <person name="Park E.B."/>
            <person name="Lee J."/>
            <person name="Choi B.S."/>
            <person name="Kang S.J."/>
        </authorList>
    </citation>
    <scope>FUNCTION</scope>
    <scope>DOMAIN</scope>
    <scope>MONOMER</scope>
    <scope>DNA-BINDING</scope>
</reference>
<reference key="15">
    <citation type="journal article" date="2017" name="Immunity">
        <title>Inflammasome activation triggers caspase-1-mediated cleavage of cGAS to regulate responses to DNA virus infection.</title>
        <authorList>
            <person name="Wang Y."/>
            <person name="Ning X."/>
            <person name="Gao P."/>
            <person name="Wu S."/>
            <person name="Sha M."/>
            <person name="Lv M."/>
            <person name="Zhou X."/>
            <person name="Gao J."/>
            <person name="Fang R."/>
            <person name="Meng G."/>
            <person name="Su X."/>
            <person name="Jiang Z."/>
        </authorList>
    </citation>
    <scope>FUNCTION</scope>
    <scope>DOMAIN</scope>
    <scope>CLEAVAGE</scope>
    <scope>ACTIVITY REGULATION</scope>
</reference>
<reference key="16">
    <citation type="journal article" date="2017" name="J. Immunol.">
        <title>Nonspecific DNA Binding of cGAS N Terminus Promotes cGAS Activation.</title>
        <authorList>
            <person name="Tao J."/>
            <person name="Zhang X.W."/>
            <person name="Jin J."/>
            <person name="Du X.X."/>
            <person name="Lian T."/>
            <person name="Yang J."/>
            <person name="Zhou X."/>
            <person name="Jiang Z."/>
            <person name="Su X.D."/>
        </authorList>
    </citation>
    <scope>FUNCTION</scope>
    <scope>DNA-BINDING</scope>
    <scope>DOMAIN</scope>
</reference>
<reference key="17">
    <citation type="journal article" date="2017" name="Nature">
        <title>cGAS surveillance of micronuclei links genome instability to innate immunity.</title>
        <authorList>
            <person name="Mackenzie K.J."/>
            <person name="Carroll P."/>
            <person name="Martin C.A."/>
            <person name="Murina O."/>
            <person name="Fluteau A."/>
            <person name="Simpson D.J."/>
            <person name="Olova N."/>
            <person name="Sutcliffe H."/>
            <person name="Rainger J.K."/>
            <person name="Leitch A."/>
            <person name="Osborn R.T."/>
            <person name="Wheeler A.P."/>
            <person name="Nowotny M."/>
            <person name="Gilbert N."/>
            <person name="Chandra T."/>
            <person name="Reijns M.A.M."/>
            <person name="Jackson A.P."/>
        </authorList>
    </citation>
    <scope>FUNCTION</scope>
</reference>
<reference key="18">
    <citation type="journal article" date="2017" name="Nat. Cell Biol.">
        <title>Innate immune sensing of cytosolic chromatin fragments through cGAS promotes senescence.</title>
        <authorList>
            <person name="Glueck S."/>
            <person name="Guey B."/>
            <person name="Gulen M.F."/>
            <person name="Wolter K."/>
            <person name="Kang T.W."/>
            <person name="Schmacke N.A."/>
            <person name="Bridgeman A."/>
            <person name="Rehwinkel J."/>
            <person name="Zender L."/>
            <person name="Ablasser A."/>
        </authorList>
    </citation>
    <scope>FUNCTION</scope>
</reference>
<reference key="19">
    <citation type="journal article" date="2017" name="PLoS Pathog.">
        <title>SENP7 potentiates cGAS activation by relieving SUMO-mediated inhibition of cytosolic DNA sensing.</title>
        <authorList>
            <person name="Cui Y."/>
            <person name="Yu H."/>
            <person name="Zheng X."/>
            <person name="Peng R."/>
            <person name="Wang Q."/>
            <person name="Zhou Y."/>
            <person name="Wang R."/>
            <person name="Wang J."/>
            <person name="Qu B."/>
            <person name="Shen N."/>
            <person name="Guo Q."/>
            <person name="Liu X."/>
            <person name="Wang C."/>
        </authorList>
    </citation>
    <scope>SUMOYLATION AT LYS-335; LYS-372 AND LYS-382</scope>
    <scope>DESUMOYLATION BY SENP7</scope>
    <scope>FUNCTION</scope>
    <scope>ACTIVITY REGULATION</scope>
    <scope>MUTAGENESIS OF LYS-335; LYS-372 AND LYS-382</scope>
</reference>
<reference key="20">
    <citation type="journal article" date="2018" name="Cell">
        <title>Structure of the human cGAS-DNA complex reveals enhanced control of immune surveillance.</title>
        <authorList>
            <person name="Zhou W."/>
            <person name="Whiteley A.T."/>
            <person name="de Oliveira Mann C.C."/>
            <person name="Morehouse B.R."/>
            <person name="Nowak R.P."/>
            <person name="Fischer E.S."/>
            <person name="Gray N.S."/>
            <person name="Mekalanos J.J."/>
            <person name="Kranzusch P.J."/>
        </authorList>
    </citation>
    <scope>CATALYTIC ACTIVITY</scope>
    <scope>ACTIVITY REGULATION</scope>
    <scope>MUTAGENESIS OF ASN-172; ARG-180; CYS-419 AND HIS-467</scope>
</reference>
<reference key="21">
    <citation type="journal article" date="2018" name="Immunity">
        <title>A circular RNA protects dormant hematopoietic stem cells from DNA sensor cGAS-mediated exhaustion.</title>
        <authorList>
            <person name="Xia P."/>
            <person name="Wang S."/>
            <person name="Ye B."/>
            <person name="Du Y."/>
            <person name="Li C."/>
            <person name="Xiong Z."/>
            <person name="Qu Y."/>
            <person name="Fan Z."/>
        </authorList>
    </citation>
    <scope>FUNCTION</scope>
    <scope>ACTIVITY REGULATION</scope>
</reference>
<reference key="22">
    <citation type="journal article" date="2018" name="Nature">
        <title>Nuclear cGAS suppresses DNA repair and promotes tumorigenesis.</title>
        <authorList>
            <person name="Liu H."/>
            <person name="Zhang H."/>
            <person name="Wu X."/>
            <person name="Ma D."/>
            <person name="Wu J."/>
            <person name="Wang L."/>
            <person name="Jiang Y."/>
            <person name="Fei Y."/>
            <person name="Zhu C."/>
            <person name="Tan R."/>
            <person name="Jungblut P."/>
            <person name="Pei G."/>
            <person name="Dorhoi A."/>
            <person name="Yan Q."/>
            <person name="Zhang F."/>
            <person name="Zheng R."/>
            <person name="Liu S."/>
            <person name="Liang H."/>
            <person name="Liu Z."/>
            <person name="Yang H."/>
            <person name="Chen J."/>
            <person name="Wang P."/>
            <person name="Tang T."/>
            <person name="Peng W."/>
            <person name="Hu Z."/>
            <person name="Xu Z."/>
            <person name="Huang X."/>
            <person name="Wang J."/>
            <person name="Li H."/>
            <person name="Zhou Y."/>
            <person name="Liu F."/>
            <person name="Yan D."/>
            <person name="Kaufmann S.H.E."/>
            <person name="Chen C."/>
            <person name="Mao Z."/>
            <person name="Ge B."/>
        </authorList>
    </citation>
    <scope>FUNCTION</scope>
</reference>
<reference key="23">
    <citation type="journal article" date="2018" name="Nat. Commun.">
        <title>TRIM56-mediated monoubiquitination of cGAS for cytosolic DNA sensing.</title>
        <authorList>
            <person name="Seo G.J."/>
            <person name="Kim C."/>
            <person name="Shin W.J."/>
            <person name="Sklan E.H."/>
            <person name="Eoh H."/>
            <person name="Jung J.U."/>
        </authorList>
    </citation>
    <scope>UBIQUITINATION AT LYS-335</scope>
    <scope>FUNCTION</scope>
    <scope>SUBUNIT</scope>
    <scope>ACTIVITY REGULATION</scope>
    <scope>MUTAGENESIS OF LYS-278; LYS-335 AND LYS-350</scope>
</reference>
<reference key="24">
    <citation type="journal article" date="2018" name="Science">
        <title>DNA-induced liquid phase condensation of cGAS activates innate immune signaling.</title>
        <authorList>
            <person name="Du M."/>
            <person name="Chen Z.J."/>
        </authorList>
    </citation>
    <scope>CATALYTIC ACTIVITY</scope>
    <scope>COFACTOR</scope>
</reference>
<reference key="25">
    <citation type="journal article" date="2019" name="Cell">
        <title>Phosphoinositide interactions position cGAS at the plasma membrane to ensure efficient distinction between self- and viral DNA.</title>
        <authorList>
            <person name="Barnett K.C."/>
            <person name="Coronas-Serna J.M."/>
            <person name="Zhou W."/>
            <person name="Ernandes M.J."/>
            <person name="Cao A."/>
            <person name="Kranzusch P.J."/>
            <person name="Kagan J.C."/>
        </authorList>
    </citation>
    <scope>SUBCELLULAR LOCATION</scope>
    <scope>LIPID-BINDING</scope>
</reference>
<reference key="26">
    <citation type="journal article" date="2019" name="Elife">
        <title>Tight nuclear tethering of cGAS is essential for preventing autoreactivity.</title>
        <authorList>
            <person name="Volkman H.E."/>
            <person name="Cambier S."/>
            <person name="Gray E.E."/>
            <person name="Stetson D.B."/>
        </authorList>
    </citation>
    <scope>FUNCTION</scope>
    <scope>SUBCELLULAR LOCATION</scope>
    <scope>MUTAGENESIS OF 211-GLU--ASP-213; ARG-222; LYS-240; ARG-241; 242-ILE--PRO-247; ARG-244; LYS-335; LYS-382; GLU-386 AND 395-LYS--LYS-399</scope>
</reference>
<reference key="27">
    <citation type="journal article" date="2019" name="EMBO J.">
        <title>Chromatin-bound cGAS is an inhibitor of DNA repair and hence accelerates genome destabilization and cell death.</title>
        <authorList>
            <person name="Jiang H."/>
            <person name="Xue X."/>
            <person name="Panda S."/>
            <person name="Kawale A."/>
            <person name="Hooy R.M."/>
            <person name="Liang F."/>
            <person name="Sohn J."/>
            <person name="Sung P."/>
            <person name="Gekara N.O."/>
        </authorList>
    </citation>
    <scope>FUNCTION</scope>
    <scope>SUBCELLULAR LOCATION</scope>
</reference>
<reference key="28">
    <citation type="journal article" date="2019" name="Mol. Cell">
        <title>Apoptotic caspases suppress type i interferon production via the cleavage of cGAS, MAVS, and IRF3.</title>
        <authorList>
            <person name="Ning X."/>
            <person name="Wang Y."/>
            <person name="Jing M."/>
            <person name="Sha M."/>
            <person name="Lv M."/>
            <person name="Gao P."/>
            <person name="Zhang R."/>
            <person name="Huang X."/>
            <person name="Feng J.M."/>
            <person name="Jiang Z."/>
        </authorList>
    </citation>
    <scope>PROTEOLYTIC CLEAVAGE</scope>
</reference>
<reference key="29">
    <citation type="journal article" date="2020" name="Cell Discov.">
        <title>Phosphorylation of cGAS by CDK1 impairs self-DNA sensing in mitosis.</title>
        <authorList>
            <person name="Zhong L."/>
            <person name="Hu M.M."/>
            <person name="Bian L.J."/>
            <person name="Liu Y."/>
            <person name="Chen Q."/>
            <person name="Shu H.B."/>
        </authorList>
    </citation>
    <scope>PHOSPHORYLATION AT SER-291</scope>
</reference>
<reference key="30">
    <citation type="journal article" date="2020" name="Cell Res.">
        <title>USP29 maintains the stability of cGAS and promotes cellular antiviral responses and autoimmunity.</title>
        <authorList>
            <person name="Zhang Q."/>
            <person name="Tang Z."/>
            <person name="An R."/>
            <person name="Ye L."/>
            <person name="Zhong B."/>
        </authorList>
    </citation>
    <scope>UBIQUITINATION AT LYS-271 AND LYS-464</scope>
    <scope>DEUBIQUITINATION</scope>
    <scope>MUTAGENESIS OF LYS-271 AND LYS-464</scope>
</reference>
<reference key="31">
    <citation type="journal article" date="2019" name="J. Immunol.">
        <title>USP27X deubiquitinates and stabilizes the DNA sensor cGAS to regulate cytosolic DNA-mediated signaling.</title>
        <authorList>
            <person name="Guo Y."/>
            <person name="Jiang F."/>
            <person name="Kong L."/>
            <person name="Li B."/>
            <person name="Yang Y."/>
            <person name="Zhang L."/>
            <person name="Liu B."/>
            <person name="Zheng Y."/>
            <person name="Gao C."/>
        </authorList>
    </citation>
    <scope>DEUBIQUITINATION</scope>
</reference>
<reference key="32">
    <citation type="journal article" date="2020" name="MBio">
        <title>Barrier-to-autointegration factor 1 protects against a basal cGAS-STING response.</title>
        <authorList>
            <person name="Ma H."/>
            <person name="Qian W."/>
            <person name="Bambouskova M."/>
            <person name="Collins P.L."/>
            <person name="Porter S.I."/>
            <person name="Byrum A.K."/>
            <person name="Zhang R."/>
            <person name="Artyomov M."/>
            <person name="Oltz E.M."/>
            <person name="Mosammaparast N."/>
            <person name="Miner J.J."/>
            <person name="Diamond M.S."/>
        </authorList>
    </citation>
    <scope>ACTIVITY REGULATION</scope>
</reference>
<reference key="33">
    <citation type="journal article" date="2020" name="Protein Cell">
        <title>Dephosphorylation of cGAS by PPP6C impairs its substrate binding activity and innate antiviral response.</title>
        <authorList>
            <person name="Li M."/>
            <person name="Shu H.B."/>
        </authorList>
    </citation>
    <scope>PHOSPHORYLATION AT SER-420</scope>
    <scope>DEPHOSPHORYLATION</scope>
    <scope>ACTIVITY REGULATION</scope>
    <scope>MUTAGENESIS OF SER-420</scope>
</reference>
<reference key="34">
    <citation type="journal article" date="2021" name="Sci. Signal.">
        <title>The cytosolic DNA sensor cGAS recognizes neutrophil extracellular traps.</title>
        <authorList>
            <person name="Apel F."/>
            <person name="Andreeva L."/>
            <person name="Knackstedt L.S."/>
            <person name="Streeck R."/>
            <person name="Frese C.K."/>
            <person name="Goosmann C."/>
            <person name="Hopfner K.P."/>
            <person name="Zychlinsky A."/>
        </authorList>
    </citation>
    <scope>FUNCTION</scope>
</reference>
<reference key="35">
    <citation type="journal article" date="2022" name="Bone Res.">
        <title>RIOX1-demethylated cGAS regulates ionizing radiation-elicited DNA repair.</title>
        <authorList>
            <person name="Xiao Y."/>
            <person name="Li J."/>
            <person name="Liao X."/>
            <person name="He Y."/>
            <person name="He T."/>
            <person name="Yang C."/>
            <person name="Jiang L."/>
            <person name="Jeon S.M."/>
            <person name="Lee J.H."/>
            <person name="Chen Y."/>
            <person name="Liu R."/>
            <person name="Chen Q."/>
        </authorList>
    </citation>
    <scope>FUNCTION</scope>
    <scope>METHYLATION AT LYS-491</scope>
    <scope>INTERACTION WITH PARP1 AND SGF29</scope>
    <scope>MUTAGENESIS OF TYR-201; 244-ARG--HIS-250; 275-LYS--LYS-278; 399-LYS--LYS-402; 491-LYS--ARG-497 AND LYS-491</scope>
</reference>
<reference key="36">
    <citation type="journal article" date="2022" name="Mol. Cell">
        <title>Cytoplasmic PARP1 links the genome instability to the inhibition of antiviral immunity through PARylating cGAS.</title>
        <authorList>
            <person name="Wang F."/>
            <person name="Zhao M."/>
            <person name="Chang B."/>
            <person name="Zhou Y."/>
            <person name="Wu X."/>
            <person name="Ma M."/>
            <person name="Liu S."/>
            <person name="Cao Y."/>
            <person name="Zheng M."/>
            <person name="Dang Y."/>
            <person name="Xu J."/>
            <person name="Chen L."/>
            <person name="Liu T."/>
            <person name="Tang F."/>
            <person name="Ren Y."/>
            <person name="Xu Z."/>
            <person name="Mao Z."/>
            <person name="Huang K."/>
            <person name="Luo M."/>
            <person name="Li J."/>
            <person name="Liu H."/>
            <person name="Ge B."/>
        </authorList>
    </citation>
    <scope>ADP-RIBOSYLATION AT GLU-176</scope>
    <scope>MUTAGENESIS OF GLU-176</scope>
</reference>
<reference key="37">
    <citation type="journal article" date="2024" name="Nature">
        <title>MRE11 liberates cGAS from nucleosome sequestration during tumorigenesis.</title>
        <authorList>
            <person name="Cho M.G."/>
            <person name="Kumar R.J."/>
            <person name="Lin C.C."/>
            <person name="Boyer J.A."/>
            <person name="Shahir J.A."/>
            <person name="Fagan-Solis K."/>
            <person name="Simpson D.A."/>
            <person name="Fan C."/>
            <person name="Foster C.E."/>
            <person name="Goddard A.M."/>
            <person name="Lerner L.M."/>
            <person name="Ellington S.W."/>
            <person name="Wang Q."/>
            <person name="Wang Y."/>
            <person name="Ho A.Y."/>
            <person name="Liu P."/>
            <person name="Perou C.M."/>
            <person name="Zhang Q."/>
            <person name="McGinty R.K."/>
            <person name="Purvis J.E."/>
            <person name="Gupta G.P."/>
        </authorList>
    </citation>
    <scope>ACTIVITY REGULATION</scope>
</reference>
<reference key="38">
    <citation type="journal article" date="2024" name="Nature">
        <title>The CRL5-SPSB3 ubiquitin ligase targets nuclear cGAS for degradation.</title>
        <authorList>
            <person name="Xu P."/>
            <person name="Liu Y."/>
            <person name="Liu C."/>
            <person name="Guey B."/>
            <person name="Li L."/>
            <person name="Melenec P."/>
            <person name="Ricci J."/>
            <person name="Ablasser A."/>
        </authorList>
    </citation>
    <scope>UBIQUITINATION AT LYS-409 AND LYS-410</scope>
    <scope>MUTAGENESIS OF 498-ASN-ASN-499</scope>
</reference>
<reference key="39">
    <citation type="journal article" date="2024" name="Nature">
        <title>AARS1 and AARS2 sense L-lactate to regulate cGAS as global lysine lactyltransferases.</title>
        <authorList>
            <person name="Li H."/>
            <person name="Liu C."/>
            <person name="Li R."/>
            <person name="Zhou L."/>
            <person name="Ran Y."/>
            <person name="Yang Q."/>
            <person name="Huang H."/>
            <person name="Lu H."/>
            <person name="Song H."/>
            <person name="Yang B."/>
            <person name="Ru H."/>
            <person name="Lin S."/>
            <person name="Zhang L."/>
        </authorList>
    </citation>
    <scope>FUNCTION</scope>
    <scope>ACTIVITY REGULATION</scope>
    <scope>LACTYLATION AT LYS-156</scope>
    <scope>MUTAGENESIS OF LYS-156</scope>
</reference>
<reference key="40">
    <citation type="journal article" date="2013" name="Cell">
        <title>Cyclic [G(2',5')pA(3',5')p] is the metazoan second messenger produced by DNA-activated cyclic GMP-AMP synthase.</title>
        <authorList>
            <person name="Gao P."/>
            <person name="Ascano M."/>
            <person name="Wu Y."/>
            <person name="Barchet W."/>
            <person name="Gaffney B.L."/>
            <person name="Zillinger T."/>
            <person name="Serganov A.A."/>
            <person name="Liu Y."/>
            <person name="Jones R.A."/>
            <person name="Hartmann G."/>
            <person name="Tuschl T."/>
            <person name="Patel D.J."/>
        </authorList>
    </citation>
    <scope>X-RAY CRYSTALLOGRAPHY (1.94 ANGSTROMS) OF 147-507 IN COMPLEXES WITH DNA; GMP; GTP; ATP; CYCLIC GMP-AMP; MAGNESIUM AND ZINC IONS</scope>
    <scope>FUNCTION</scope>
    <scope>COFACTOR</scope>
    <scope>CATALYTIC ACTIVITY</scope>
    <scope>DNA-BINDING</scope>
</reference>
<reference key="41">
    <citation type="journal article" date="2013" name="Immunity">
        <title>Cyclic GMP-AMP synthase is activated by double-stranded DNA-induced oligomerization.</title>
        <authorList>
            <person name="Li X."/>
            <person name="Shu C."/>
            <person name="Yi G."/>
            <person name="Chaton C.T."/>
            <person name="Shelton C.L."/>
            <person name="Diao J."/>
            <person name="Zuo X."/>
            <person name="Kao C.C."/>
            <person name="Herr A.B."/>
            <person name="Li P."/>
        </authorList>
    </citation>
    <scope>X-RAY CRYSTALLOGRAPHY (2.36 ANGSTROMS) OF 142-507 IN COMPLEX WITH 2',3'-CGAMP AND ZINC</scope>
    <scope>DOMAIN</scope>
</reference>
<reference key="42">
    <citation type="journal article" date="2014" name="Cell Rep.">
        <title>The cytosolic DNA sensor cGAS forms an oligomeric complex with DNA and undergoes switch-like conformational changes in the activation loop.</title>
        <authorList>
            <person name="Zhang X."/>
            <person name="Wu J."/>
            <person name="Du F."/>
            <person name="Xu H."/>
            <person name="Sun L."/>
            <person name="Chen Z."/>
            <person name="Brautigam C.A."/>
            <person name="Zhang X."/>
            <person name="Chen Z.J."/>
        </authorList>
    </citation>
    <scope>X-RAY CRYSTALLOGRAPHY (1.86 ANGSTROMS) OF 147-507 IN COMPLEX WITH ZINC</scope>
    <scope>SUBUNIT</scope>
</reference>
<reference evidence="51" key="43">
    <citation type="journal article" date="2017" name="Nature">
        <title>cGAS senses long and HMGB/TFAM-bound U-turn DNA by forming protein-DNA ladders.</title>
        <authorList>
            <person name="Andreeva L."/>
            <person name="Hiller B."/>
            <person name="Kostrewa D."/>
            <person name="Lassig C."/>
            <person name="de Oliveira Mann C.C."/>
            <person name="Jan Drexler D."/>
            <person name="Maiser A."/>
            <person name="Gaidt M."/>
            <person name="Leonhardt H."/>
            <person name="Hornung V."/>
            <person name="Hopfner K.P."/>
        </authorList>
    </citation>
    <scope>X-RAY CRYSTALLOGRAPHY (3.60 ANGSTROMS) OF 139-507 IN COMPLEX WITH ZINC AND DNA</scope>
    <scope>FUNCTION</scope>
    <scope>SUBUNIT</scope>
</reference>
<reference evidence="52 53 54" key="44">
    <citation type="journal article" date="2017" name="Nat. Commun.">
        <title>Small molecule inhibition of cGAS reduces interferon expression in primary macrophages from autoimmune mice.</title>
        <authorList>
            <person name="Vincent J."/>
            <person name="Adura C."/>
            <person name="Gao P."/>
            <person name="Luz A."/>
            <person name="Lama L."/>
            <person name="Asano Y."/>
            <person name="Okamoto R."/>
            <person name="Imaeda T."/>
            <person name="Aida J."/>
            <person name="Rothamel K."/>
            <person name="Gogakos T."/>
            <person name="Steinberg J."/>
            <person name="Reasoner S."/>
            <person name="Aso K."/>
            <person name="Tuschl T."/>
            <person name="Patel D.J."/>
            <person name="Glickman J.F."/>
            <person name="Ascano M."/>
        </authorList>
    </citation>
    <scope>X-RAY CRYSTALLOGRAPHY (1.83 ANGSTROMS) OF 147-507 IN COMPLEX WITH ZINC AND INHIBITOR RU.521</scope>
    <scope>CATALYTIC ACTIVITY</scope>
    <scope>ACTIVITY REGULATION</scope>
</reference>
<reference evidence="59 60 61" key="45">
    <citation type="journal article" date="2020" name="Cell Rep.">
        <title>Mn2+ directly activates cGAS and structural analysis suggests Mn2+ Induces a noncanonical catalytic synthesis of 2'3'-cGAMP.</title>
        <authorList>
            <person name="Zhao Z."/>
            <person name="Ma Z."/>
            <person name="Wang B."/>
            <person name="Guan Y."/>
            <person name="Su X.D."/>
            <person name="Jiang Z."/>
        </authorList>
    </citation>
    <scope>X-RAY CRYSTALLOGRAPHY (2.13 ANGSTROMS) OF 61-507 IN COMPLEX WITH ZINC</scope>
    <scope>FUNCTION</scope>
    <scope>CATALYTIC ACTIVITY</scope>
    <scope>COFACTOR</scope>
</reference>
<reference evidence="55 56 57" key="46">
    <citation type="journal article" date="2020" name="Nature">
        <title>The molecular basis of tight nuclear tethering and inactivation of cGAS.</title>
        <authorList>
            <person name="Zhao B."/>
            <person name="Xu P."/>
            <person name="Rowlett C.M."/>
            <person name="Jing T."/>
            <person name="Shinde O."/>
            <person name="Lei Y."/>
            <person name="West A.P."/>
            <person name="Liu W.R."/>
            <person name="Li P."/>
        </authorList>
    </citation>
    <scope>STRUCTURE BY ELECTRON MICROSCOPY (2.98 ANGSTROMS) OF 142-507 IN COMPLEX WITH NUCLEOSOME CORE AND ZINC</scope>
    <scope>COFACTOR</scope>
    <scope>FUNCTION</scope>
    <scope>INTERACTION WITH NUCLEOSOMES</scope>
    <scope>ACTIVITY REGULATION</scope>
    <scope>SUBCELLULAR LOCATION</scope>
    <scope>DOMAIN</scope>
    <scope>MUTAGENESIS OF ARG-222; LYS-238; LYS-240; ARG-241; ARG-244; LYS-315; LYS-323; LYS-335; ARG-341; ARG-342 AND LYS-382</scope>
</reference>
<reference evidence="58" key="47">
    <citation type="journal article" date="2020" name="Nature">
        <title>Structural basis for sequestration and autoinhibition of cGAS by chromatin.</title>
        <authorList>
            <person name="Michalski S."/>
            <person name="de Oliveira Mann C.C."/>
            <person name="Stafford C.A."/>
            <person name="Witte G."/>
            <person name="Bartho J."/>
            <person name="Lammens K."/>
            <person name="Hornung V."/>
            <person name="Hopfner K.P."/>
        </authorList>
    </citation>
    <scope>STRUCTURE BY ELECTRON MICROSCOPY (3.11 ANGSTROMS) OF 139-507 IN COMPLEX WITH NUCLEOSOME CORE AND ZINC</scope>
    <scope>COFACTOR</scope>
    <scope>FUNCTION</scope>
    <scope>INTERACTION WITH NUCLEOSOMES</scope>
    <scope>ACTIVITY REGULATION</scope>
    <scope>SUBCELLULAR LOCATION</scope>
    <scope>DOMAIN</scope>
    <scope>MUTAGENESIS OF ARG-222; LYS-240; ARG-241; ARG-337; ARG-341 AND ARG-342</scope>
</reference>
<reference evidence="62 63" key="48">
    <citation type="journal article" date="2020" name="Science">
        <title>Structural basis of nucleosome-dependent cGAS inhibition.</title>
        <authorList>
            <person name="Boyer J.A."/>
            <person name="Spangler C.J."/>
            <person name="Strauss J.D."/>
            <person name="Cesmat A.P."/>
            <person name="Liu P."/>
            <person name="McGinty R.K."/>
            <person name="Zhang Q."/>
        </authorList>
    </citation>
    <scope>STRUCTURE BY ELECTRON MICROSCOPY (3.30 ANGSTROMS) OF 142-507 IN COMPLEX WITH NUCLEOSOME AND ZINC</scope>
    <scope>COFACTOR</scope>
    <scope>FUNCTION</scope>
    <scope>INTERACTION WITH NUCLEOSOMES</scope>
    <scope>ACTIVITY REGULATION</scope>
    <scope>SUBCELLULAR LOCATION</scope>
    <scope>DOMAIN</scope>
    <scope>MUTAGENESIS OF ARG-222; LYS-240 AND ARG-241</scope>
</reference>
<organism>
    <name type="scientific">Mus musculus</name>
    <name type="common">Mouse</name>
    <dbReference type="NCBI Taxonomy" id="10090"/>
    <lineage>
        <taxon>Eukaryota</taxon>
        <taxon>Metazoa</taxon>
        <taxon>Chordata</taxon>
        <taxon>Craniata</taxon>
        <taxon>Vertebrata</taxon>
        <taxon>Euteleostomi</taxon>
        <taxon>Mammalia</taxon>
        <taxon>Eutheria</taxon>
        <taxon>Euarchontoglires</taxon>
        <taxon>Glires</taxon>
        <taxon>Rodentia</taxon>
        <taxon>Myomorpha</taxon>
        <taxon>Muroidea</taxon>
        <taxon>Muridae</taxon>
        <taxon>Murinae</taxon>
        <taxon>Mus</taxon>
        <taxon>Mus</taxon>
    </lineage>
</organism>
<dbReference type="EC" id="2.7.7.86" evidence="4 22 25 26"/>
<dbReference type="EMBL" id="KC294567">
    <property type="protein sequence ID" value="AGB51854.1"/>
    <property type="molecule type" value="mRNA"/>
</dbReference>
<dbReference type="EMBL" id="AK054330">
    <property type="protein sequence ID" value="BAC35733.1"/>
    <property type="molecule type" value="mRNA"/>
</dbReference>
<dbReference type="EMBL" id="AK145268">
    <property type="protein sequence ID" value="BAE26335.1"/>
    <property type="molecule type" value="mRNA"/>
</dbReference>
<dbReference type="EMBL" id="AC158987">
    <property type="status" value="NOT_ANNOTATED_CDS"/>
    <property type="molecule type" value="Genomic_DNA"/>
</dbReference>
<dbReference type="EMBL" id="CH466522">
    <property type="protein sequence ID" value="EDL26396.1"/>
    <property type="molecule type" value="Genomic_DNA"/>
</dbReference>
<dbReference type="EMBL" id="BC052196">
    <property type="protein sequence ID" value="AAH52196.1"/>
    <property type="molecule type" value="mRNA"/>
</dbReference>
<dbReference type="EMBL" id="BC145651">
    <property type="protein sequence ID" value="AAI45652.1"/>
    <property type="molecule type" value="mRNA"/>
</dbReference>
<dbReference type="EMBL" id="BC145653">
    <property type="protein sequence ID" value="AAI45654.1"/>
    <property type="molecule type" value="mRNA"/>
</dbReference>
<dbReference type="CCDS" id="CCDS40702.1"/>
<dbReference type="RefSeq" id="NP_775562.2">
    <property type="nucleotide sequence ID" value="NM_173386.5"/>
</dbReference>
<dbReference type="PDB" id="4K8V">
    <property type="method" value="X-ray"/>
    <property type="resolution" value="2.00 A"/>
    <property type="chains" value="A/B/C/D=147-507"/>
</dbReference>
<dbReference type="PDB" id="4K96">
    <property type="method" value="X-ray"/>
    <property type="resolution" value="2.08 A"/>
    <property type="chains" value="A/B=147-507"/>
</dbReference>
<dbReference type="PDB" id="4K97">
    <property type="method" value="X-ray"/>
    <property type="resolution" value="2.41 A"/>
    <property type="chains" value="A=147-507"/>
</dbReference>
<dbReference type="PDB" id="4K98">
    <property type="method" value="X-ray"/>
    <property type="resolution" value="1.94 A"/>
    <property type="chains" value="A=147-507"/>
</dbReference>
<dbReference type="PDB" id="4K99">
    <property type="method" value="X-ray"/>
    <property type="resolution" value="1.95 A"/>
    <property type="chains" value="A=147-507"/>
</dbReference>
<dbReference type="PDB" id="4K9A">
    <property type="method" value="X-ray"/>
    <property type="resolution" value="2.26 A"/>
    <property type="chains" value="A=147-507"/>
</dbReference>
<dbReference type="PDB" id="4K9B">
    <property type="method" value="X-ray"/>
    <property type="resolution" value="2.26 A"/>
    <property type="chains" value="A=147-507"/>
</dbReference>
<dbReference type="PDB" id="4LEY">
    <property type="method" value="X-ray"/>
    <property type="resolution" value="2.50 A"/>
    <property type="chains" value="A/B/C/D=142-507"/>
</dbReference>
<dbReference type="PDB" id="4LEZ">
    <property type="method" value="X-ray"/>
    <property type="resolution" value="2.36 A"/>
    <property type="chains" value="A/C=142-507"/>
</dbReference>
<dbReference type="PDB" id="4O6A">
    <property type="method" value="X-ray"/>
    <property type="resolution" value="1.86 A"/>
    <property type="chains" value="A/B=147-507"/>
</dbReference>
<dbReference type="PDB" id="5N6I">
    <property type="method" value="X-ray"/>
    <property type="resolution" value="3.60 A"/>
    <property type="chains" value="A/B/C/D/E/F=139-507"/>
</dbReference>
<dbReference type="PDB" id="5XZB">
    <property type="method" value="X-ray"/>
    <property type="resolution" value="2.13 A"/>
    <property type="chains" value="A=149-505"/>
</dbReference>
<dbReference type="PDB" id="5XZE">
    <property type="method" value="X-ray"/>
    <property type="resolution" value="2.18 A"/>
    <property type="chains" value="A=147-507"/>
</dbReference>
<dbReference type="PDB" id="5XZG">
    <property type="method" value="X-ray"/>
    <property type="resolution" value="1.83 A"/>
    <property type="chains" value="A=147-507"/>
</dbReference>
<dbReference type="PDB" id="6X59">
    <property type="method" value="EM"/>
    <property type="resolution" value="2.98 A"/>
    <property type="chains" value="K=142-507"/>
</dbReference>
<dbReference type="PDB" id="6X5A">
    <property type="method" value="EM"/>
    <property type="resolution" value="4.36 A"/>
    <property type="chains" value="K=142-507"/>
</dbReference>
<dbReference type="PDB" id="6XJD">
    <property type="method" value="EM"/>
    <property type="resolution" value="6.80 A"/>
    <property type="chains" value="K/L=142-507"/>
</dbReference>
<dbReference type="PDB" id="7A08">
    <property type="method" value="EM"/>
    <property type="resolution" value="3.11 A"/>
    <property type="chains" value="a=139-507"/>
</dbReference>
<dbReference type="PDB" id="7BUJ">
    <property type="method" value="X-ray"/>
    <property type="resolution" value="2.13 A"/>
    <property type="chains" value="A/B=61-507"/>
</dbReference>
<dbReference type="PDB" id="7BUM">
    <property type="method" value="X-ray"/>
    <property type="resolution" value="3.05 A"/>
    <property type="chains" value="A/B=1-507"/>
</dbReference>
<dbReference type="PDB" id="7BUQ">
    <property type="method" value="X-ray"/>
    <property type="resolution" value="3.09 A"/>
    <property type="chains" value="A/B=1-507"/>
</dbReference>
<dbReference type="PDB" id="7JO9">
    <property type="method" value="EM"/>
    <property type="resolution" value="3.30 A"/>
    <property type="chains" value="K=142-507"/>
</dbReference>
<dbReference type="PDB" id="7JOA">
    <property type="method" value="EM"/>
    <property type="resolution" value="3.30 A"/>
    <property type="chains" value="K=142-507"/>
</dbReference>
<dbReference type="PDB" id="7KXS">
    <property type="method" value="X-ray"/>
    <property type="resolution" value="2.60 A"/>
    <property type="chains" value="A/B=147-507"/>
</dbReference>
<dbReference type="PDB" id="7UTT">
    <property type="method" value="X-ray"/>
    <property type="resolution" value="2.04 A"/>
    <property type="chains" value="A/C=147-507"/>
</dbReference>
<dbReference type="PDB" id="7UUX">
    <property type="method" value="X-ray"/>
    <property type="resolution" value="2.26 A"/>
    <property type="chains" value="A/C=147-507"/>
</dbReference>
<dbReference type="PDB" id="7UXW">
    <property type="method" value="X-ray"/>
    <property type="resolution" value="2.57 A"/>
    <property type="chains" value="A/C=147-507"/>
</dbReference>
<dbReference type="PDB" id="7UYQ">
    <property type="method" value="X-ray"/>
    <property type="resolution" value="2.57 A"/>
    <property type="chains" value="A/C=147-507"/>
</dbReference>
<dbReference type="PDB" id="7UYZ">
    <property type="method" value="X-ray"/>
    <property type="resolution" value="2.49 A"/>
    <property type="chains" value="A/C=147-507"/>
</dbReference>
<dbReference type="PDB" id="7UZR">
    <property type="method" value="X-ray"/>
    <property type="resolution" value="2.70 A"/>
    <property type="chains" value="A/C=147-507"/>
</dbReference>
<dbReference type="PDB" id="7V0C">
    <property type="method" value="X-ray"/>
    <property type="resolution" value="2.57 A"/>
    <property type="chains" value="A/C=147-507"/>
</dbReference>
<dbReference type="PDB" id="7V0R">
    <property type="method" value="X-ray"/>
    <property type="resolution" value="2.51 A"/>
    <property type="chains" value="A/C=147-507"/>
</dbReference>
<dbReference type="PDB" id="7V0W">
    <property type="method" value="X-ray"/>
    <property type="resolution" value="2.66 A"/>
    <property type="chains" value="A/C=147-507"/>
</dbReference>
<dbReference type="PDB" id="8EAE">
    <property type="method" value="X-ray"/>
    <property type="resolution" value="2.56 A"/>
    <property type="chains" value="A/C=147-507"/>
</dbReference>
<dbReference type="PDB" id="8ECC">
    <property type="method" value="X-ray"/>
    <property type="resolution" value="2.44 A"/>
    <property type="chains" value="A/C=147-507"/>
</dbReference>
<dbReference type="PDB" id="8G10">
    <property type="method" value="X-ray"/>
    <property type="resolution" value="2.47 A"/>
    <property type="chains" value="A/C=147-507"/>
</dbReference>
<dbReference type="PDB" id="8G1J">
    <property type="method" value="X-ray"/>
    <property type="resolution" value="2.30 A"/>
    <property type="chains" value="A/C=147-507"/>
</dbReference>
<dbReference type="PDB" id="8G23">
    <property type="method" value="X-ray"/>
    <property type="resolution" value="2.71 A"/>
    <property type="chains" value="A/C=147-507"/>
</dbReference>
<dbReference type="PDB" id="8G2P">
    <property type="method" value="X-ray"/>
    <property type="resolution" value="2.52 A"/>
    <property type="chains" value="A/C=147-507"/>
</dbReference>
<dbReference type="PDB" id="8G2Q">
    <property type="method" value="X-ray"/>
    <property type="resolution" value="2.37 A"/>
    <property type="chains" value="A/C=147-507"/>
</dbReference>
<dbReference type="PDB" id="8GIM">
    <property type="method" value="X-ray"/>
    <property type="resolution" value="2.63 A"/>
    <property type="chains" value="A/C=147-507"/>
</dbReference>
<dbReference type="PDB" id="8GIN">
    <property type="method" value="X-ray"/>
    <property type="resolution" value="2.75 A"/>
    <property type="chains" value="A/C=147-507"/>
</dbReference>
<dbReference type="PDB" id="8GIO">
    <property type="method" value="X-ray"/>
    <property type="resolution" value="2.67 A"/>
    <property type="chains" value="A/C=147-507"/>
</dbReference>
<dbReference type="PDB" id="8GIP">
    <property type="method" value="X-ray"/>
    <property type="resolution" value="2.70 A"/>
    <property type="chains" value="A/C=147-507"/>
</dbReference>
<dbReference type="PDB" id="8GIR">
    <property type="method" value="X-ray"/>
    <property type="resolution" value="2.50 A"/>
    <property type="chains" value="A/C=147-507"/>
</dbReference>
<dbReference type="PDB" id="8GIS">
    <property type="method" value="X-ray"/>
    <property type="resolution" value="2.46 A"/>
    <property type="chains" value="A/C=147-507"/>
</dbReference>
<dbReference type="PDB" id="8GIT">
    <property type="method" value="X-ray"/>
    <property type="resolution" value="2.72 A"/>
    <property type="chains" value="A/C=147-507"/>
</dbReference>
<dbReference type="PDB" id="8SHK">
    <property type="method" value="X-ray"/>
    <property type="resolution" value="1.71 A"/>
    <property type="chains" value="C=147-507"/>
</dbReference>
<dbReference type="PDB" id="8SHU">
    <property type="method" value="X-ray"/>
    <property type="resolution" value="1.71 A"/>
    <property type="chains" value="C=147-507"/>
</dbReference>
<dbReference type="PDB" id="8SHY">
    <property type="method" value="X-ray"/>
    <property type="resolution" value="1.77 A"/>
    <property type="chains" value="C=147-507"/>
</dbReference>
<dbReference type="PDB" id="8SJ0">
    <property type="method" value="X-ray"/>
    <property type="resolution" value="2.55 A"/>
    <property type="chains" value="A/C=147-507"/>
</dbReference>
<dbReference type="PDB" id="8SJ1">
    <property type="method" value="X-ray"/>
    <property type="resolution" value="2.81 A"/>
    <property type="chains" value="A/C=147-507"/>
</dbReference>
<dbReference type="PDB" id="8SJ2">
    <property type="method" value="X-ray"/>
    <property type="resolution" value="2.23 A"/>
    <property type="chains" value="A/C=147-507"/>
</dbReference>
<dbReference type="PDB" id="8SKT">
    <property type="method" value="X-ray"/>
    <property type="resolution" value="2.69 A"/>
    <property type="chains" value="A/C=147-507"/>
</dbReference>
<dbReference type="PDBsum" id="4K8V"/>
<dbReference type="PDBsum" id="4K96"/>
<dbReference type="PDBsum" id="4K97"/>
<dbReference type="PDBsum" id="4K98"/>
<dbReference type="PDBsum" id="4K99"/>
<dbReference type="PDBsum" id="4K9A"/>
<dbReference type="PDBsum" id="4K9B"/>
<dbReference type="PDBsum" id="4LEY"/>
<dbReference type="PDBsum" id="4LEZ"/>
<dbReference type="PDBsum" id="4O6A"/>
<dbReference type="PDBsum" id="5N6I"/>
<dbReference type="PDBsum" id="5XZB"/>
<dbReference type="PDBsum" id="5XZE"/>
<dbReference type="PDBsum" id="5XZG"/>
<dbReference type="PDBsum" id="6X59"/>
<dbReference type="PDBsum" id="6X5A"/>
<dbReference type="PDBsum" id="6XJD"/>
<dbReference type="PDBsum" id="7A08"/>
<dbReference type="PDBsum" id="7BUJ"/>
<dbReference type="PDBsum" id="7BUM"/>
<dbReference type="PDBsum" id="7BUQ"/>
<dbReference type="PDBsum" id="7JO9"/>
<dbReference type="PDBsum" id="7JOA"/>
<dbReference type="PDBsum" id="7KXS"/>
<dbReference type="PDBsum" id="7UTT"/>
<dbReference type="PDBsum" id="7UUX"/>
<dbReference type="PDBsum" id="7UXW"/>
<dbReference type="PDBsum" id="7UYQ"/>
<dbReference type="PDBsum" id="7UYZ"/>
<dbReference type="PDBsum" id="7UZR"/>
<dbReference type="PDBsum" id="7V0C"/>
<dbReference type="PDBsum" id="7V0R"/>
<dbReference type="PDBsum" id="7V0W"/>
<dbReference type="PDBsum" id="8EAE"/>
<dbReference type="PDBsum" id="8ECC"/>
<dbReference type="PDBsum" id="8G10"/>
<dbReference type="PDBsum" id="8G1J"/>
<dbReference type="PDBsum" id="8G23"/>
<dbReference type="PDBsum" id="8G2P"/>
<dbReference type="PDBsum" id="8G2Q"/>
<dbReference type="PDBsum" id="8GIM"/>
<dbReference type="PDBsum" id="8GIN"/>
<dbReference type="PDBsum" id="8GIO"/>
<dbReference type="PDBsum" id="8GIP"/>
<dbReference type="PDBsum" id="8GIR"/>
<dbReference type="PDBsum" id="8GIS"/>
<dbReference type="PDBsum" id="8GIT"/>
<dbReference type="PDBsum" id="8SHK"/>
<dbReference type="PDBsum" id="8SHU"/>
<dbReference type="PDBsum" id="8SHY"/>
<dbReference type="PDBsum" id="8SJ0"/>
<dbReference type="PDBsum" id="8SJ1"/>
<dbReference type="PDBsum" id="8SJ2"/>
<dbReference type="PDBsum" id="8SKT"/>
<dbReference type="EMDB" id="EMD-11601"/>
<dbReference type="EMDB" id="EMD-22046"/>
<dbReference type="EMDB" id="EMD-22047"/>
<dbReference type="EMDB" id="EMD-22206"/>
<dbReference type="EMDB" id="EMD-22408"/>
<dbReference type="EMDB" id="EMD-22409"/>
<dbReference type="SMR" id="Q8C6L5"/>
<dbReference type="BioGRID" id="229561">
    <property type="interactions" value="2"/>
</dbReference>
<dbReference type="FunCoup" id="Q8C6L5">
    <property type="interactions" value="1496"/>
</dbReference>
<dbReference type="STRING" id="10090.ENSMUSP00000063331"/>
<dbReference type="BindingDB" id="Q8C6L5"/>
<dbReference type="ChEMBL" id="CHEMBL4523383"/>
<dbReference type="GuidetoPHARMACOLOGY" id="3165"/>
<dbReference type="iPTMnet" id="Q8C6L5"/>
<dbReference type="PhosphoSitePlus" id="Q8C6L5"/>
<dbReference type="PaxDb" id="10090-ENSMUSP00000063331"/>
<dbReference type="ProteomicsDB" id="281655"/>
<dbReference type="Pumba" id="Q8C6L5"/>
<dbReference type="Antibodypedia" id="31341">
    <property type="antibodies" value="240 antibodies from 33 providers"/>
</dbReference>
<dbReference type="DNASU" id="214763"/>
<dbReference type="Ensembl" id="ENSMUST00000070742.14">
    <property type="protein sequence ID" value="ENSMUSP00000063331.8"/>
    <property type="gene ID" value="ENSMUSG00000032344.18"/>
</dbReference>
<dbReference type="GeneID" id="214763"/>
<dbReference type="KEGG" id="mmu:214763"/>
<dbReference type="UCSC" id="uc009quj.2">
    <property type="organism name" value="mouse"/>
</dbReference>
<dbReference type="AGR" id="MGI:2442261"/>
<dbReference type="CTD" id="115004"/>
<dbReference type="MGI" id="MGI:2442261">
    <property type="gene designation" value="Cgas"/>
</dbReference>
<dbReference type="VEuPathDB" id="HostDB:ENSMUSG00000032344"/>
<dbReference type="eggNOG" id="KOG3963">
    <property type="taxonomic scope" value="Eukaryota"/>
</dbReference>
<dbReference type="GeneTree" id="ENSGT01050000244827"/>
<dbReference type="HOGENOM" id="CLU_040428_2_0_1"/>
<dbReference type="InParanoid" id="Q8C6L5"/>
<dbReference type="OMA" id="EKTCCER"/>
<dbReference type="OrthoDB" id="6054650at2759"/>
<dbReference type="PhylomeDB" id="Q8C6L5"/>
<dbReference type="TreeFam" id="TF331255"/>
<dbReference type="BRENDA" id="2.7.7.86">
    <property type="organism ID" value="3474"/>
</dbReference>
<dbReference type="BioGRID-ORCS" id="214763">
    <property type="hits" value="2 hits in 75 CRISPR screens"/>
</dbReference>
<dbReference type="CD-CODE" id="394AC681">
    <property type="entry name" value="cGAS foci"/>
</dbReference>
<dbReference type="CD-CODE" id="C6D11C2A">
    <property type="entry name" value="Synthetic Condensate 000217"/>
</dbReference>
<dbReference type="ChiTaRS" id="Cgas">
    <property type="organism name" value="mouse"/>
</dbReference>
<dbReference type="EvolutionaryTrace" id="Q8C6L5"/>
<dbReference type="PRO" id="PR:Q8C6L5"/>
<dbReference type="Proteomes" id="UP000000589">
    <property type="component" value="Chromosome 9"/>
</dbReference>
<dbReference type="RNAct" id="Q8C6L5">
    <property type="molecule type" value="protein"/>
</dbReference>
<dbReference type="Bgee" id="ENSMUSG00000032344">
    <property type="expression patterns" value="Expressed in secondary oocyte and 118 other cell types or tissues"/>
</dbReference>
<dbReference type="ExpressionAtlas" id="Q8C6L5">
    <property type="expression patterns" value="baseline and differential"/>
</dbReference>
<dbReference type="GO" id="GO:0005829">
    <property type="term" value="C:cytosol"/>
    <property type="evidence" value="ECO:0000314"/>
    <property type="project" value="UniProtKB"/>
</dbReference>
<dbReference type="GO" id="GO:0016604">
    <property type="term" value="C:nuclear body"/>
    <property type="evidence" value="ECO:0007669"/>
    <property type="project" value="Ensembl"/>
</dbReference>
<dbReference type="GO" id="GO:0005634">
    <property type="term" value="C:nucleus"/>
    <property type="evidence" value="ECO:0000314"/>
    <property type="project" value="UniProtKB"/>
</dbReference>
<dbReference type="GO" id="GO:0005886">
    <property type="term" value="C:plasma membrane"/>
    <property type="evidence" value="ECO:0000314"/>
    <property type="project" value="UniProtKB"/>
</dbReference>
<dbReference type="GO" id="GO:0035861">
    <property type="term" value="C:site of double-strand break"/>
    <property type="evidence" value="ECO:0000250"/>
    <property type="project" value="UniProtKB"/>
</dbReference>
<dbReference type="GO" id="GO:0061501">
    <property type="term" value="F:2',3'-cyclic GMP-AMP synthase activity"/>
    <property type="evidence" value="ECO:0000314"/>
    <property type="project" value="UniProtKB"/>
</dbReference>
<dbReference type="GO" id="GO:0005524">
    <property type="term" value="F:ATP binding"/>
    <property type="evidence" value="ECO:0007669"/>
    <property type="project" value="UniProtKB-KW"/>
</dbReference>
<dbReference type="GO" id="GO:0003682">
    <property type="term" value="F:chromatin binding"/>
    <property type="evidence" value="ECO:0000314"/>
    <property type="project" value="UniProtKB"/>
</dbReference>
<dbReference type="GO" id="GO:0003677">
    <property type="term" value="F:DNA binding"/>
    <property type="evidence" value="ECO:0000314"/>
    <property type="project" value="UniProtKB"/>
</dbReference>
<dbReference type="GO" id="GO:0003690">
    <property type="term" value="F:double-stranded DNA binding"/>
    <property type="evidence" value="ECO:0000314"/>
    <property type="project" value="UniProtKB"/>
</dbReference>
<dbReference type="GO" id="GO:0005525">
    <property type="term" value="F:GTP binding"/>
    <property type="evidence" value="ECO:0007669"/>
    <property type="project" value="UniProtKB-KW"/>
</dbReference>
<dbReference type="GO" id="GO:0046872">
    <property type="term" value="F:metal ion binding"/>
    <property type="evidence" value="ECO:0007669"/>
    <property type="project" value="UniProtKB-KW"/>
</dbReference>
<dbReference type="GO" id="GO:0140693">
    <property type="term" value="F:molecular condensate scaffold activity"/>
    <property type="evidence" value="ECO:0000314"/>
    <property type="project" value="UniProtKB"/>
</dbReference>
<dbReference type="GO" id="GO:0031491">
    <property type="term" value="F:nucleosome binding"/>
    <property type="evidence" value="ECO:0000314"/>
    <property type="project" value="UniProtKB"/>
</dbReference>
<dbReference type="GO" id="GO:0005546">
    <property type="term" value="F:phosphatidylinositol-4,5-bisphosphate binding"/>
    <property type="evidence" value="ECO:0000250"/>
    <property type="project" value="UniProtKB"/>
</dbReference>
<dbReference type="GO" id="GO:0160004">
    <property type="term" value="F:poly-ADP-D-ribose modification-dependent protein binding"/>
    <property type="evidence" value="ECO:0000314"/>
    <property type="project" value="UniProtKB"/>
</dbReference>
<dbReference type="GO" id="GO:0042803">
    <property type="term" value="F:protein homodimerization activity"/>
    <property type="evidence" value="ECO:0000314"/>
    <property type="project" value="UniProtKB"/>
</dbReference>
<dbReference type="GO" id="GO:0002218">
    <property type="term" value="P:activation of innate immune response"/>
    <property type="evidence" value="ECO:0000314"/>
    <property type="project" value="UniProtKB"/>
</dbReference>
<dbReference type="GO" id="GO:0019933">
    <property type="term" value="P:cAMP-mediated signaling"/>
    <property type="evidence" value="ECO:0007669"/>
    <property type="project" value="Ensembl"/>
</dbReference>
<dbReference type="GO" id="GO:0071360">
    <property type="term" value="P:cellular response to exogenous dsRNA"/>
    <property type="evidence" value="ECO:0000314"/>
    <property type="project" value="UniProtKB"/>
</dbReference>
<dbReference type="GO" id="GO:0140896">
    <property type="term" value="P:cGAS/STING signaling pathway"/>
    <property type="evidence" value="ECO:0000314"/>
    <property type="project" value="UniProtKB"/>
</dbReference>
<dbReference type="GO" id="GO:0019934">
    <property type="term" value="P:cGMP-mediated signaling"/>
    <property type="evidence" value="ECO:0007669"/>
    <property type="project" value="Ensembl"/>
</dbReference>
<dbReference type="GO" id="GO:0051607">
    <property type="term" value="P:defense response to virus"/>
    <property type="evidence" value="ECO:0000314"/>
    <property type="project" value="UniProtKB"/>
</dbReference>
<dbReference type="GO" id="GO:0008340">
    <property type="term" value="P:determination of adult lifespan"/>
    <property type="evidence" value="ECO:0000316"/>
    <property type="project" value="MGI"/>
</dbReference>
<dbReference type="GO" id="GO:0006974">
    <property type="term" value="P:DNA damage response"/>
    <property type="evidence" value="ECO:0000250"/>
    <property type="project" value="UniProtKB"/>
</dbReference>
<dbReference type="GO" id="GO:0006281">
    <property type="term" value="P:DNA repair"/>
    <property type="evidence" value="ECO:0007669"/>
    <property type="project" value="UniProtKB-KW"/>
</dbReference>
<dbReference type="GO" id="GO:0045087">
    <property type="term" value="P:innate immune response"/>
    <property type="evidence" value="ECO:0007669"/>
    <property type="project" value="UniProtKB-KW"/>
</dbReference>
<dbReference type="GO" id="GO:0160049">
    <property type="term" value="P:negative regulation of cGAS/STING signaling pathway"/>
    <property type="evidence" value="ECO:0007669"/>
    <property type="project" value="Ensembl"/>
</dbReference>
<dbReference type="GO" id="GO:0045738">
    <property type="term" value="P:negative regulation of DNA repair"/>
    <property type="evidence" value="ECO:0000314"/>
    <property type="project" value="UniProt"/>
</dbReference>
<dbReference type="GO" id="GO:2000042">
    <property type="term" value="P:negative regulation of double-strand break repair via homologous recombination"/>
    <property type="evidence" value="ECO:0000314"/>
    <property type="project" value="UniProtKB"/>
</dbReference>
<dbReference type="GO" id="GO:0038001">
    <property type="term" value="P:paracrine signaling"/>
    <property type="evidence" value="ECO:0000314"/>
    <property type="project" value="UniProtKB"/>
</dbReference>
<dbReference type="GO" id="GO:2000774">
    <property type="term" value="P:positive regulation of cellular senescence"/>
    <property type="evidence" value="ECO:0000314"/>
    <property type="project" value="UniProtKB"/>
</dbReference>
<dbReference type="GO" id="GO:0002230">
    <property type="term" value="P:positive regulation of defense response to virus by host"/>
    <property type="evidence" value="ECO:0000314"/>
    <property type="project" value="UniProtKB"/>
</dbReference>
<dbReference type="GO" id="GO:0032481">
    <property type="term" value="P:positive regulation of type I interferon production"/>
    <property type="evidence" value="ECO:0000314"/>
    <property type="project" value="UniProtKB"/>
</dbReference>
<dbReference type="GO" id="GO:0050776">
    <property type="term" value="P:regulation of immune response"/>
    <property type="evidence" value="ECO:0000316"/>
    <property type="project" value="MGI"/>
</dbReference>
<dbReference type="GO" id="GO:0002637">
    <property type="term" value="P:regulation of immunoglobulin production"/>
    <property type="evidence" value="ECO:0000316"/>
    <property type="project" value="MGI"/>
</dbReference>
<dbReference type="GO" id="GO:0050863">
    <property type="term" value="P:regulation of T cell activation"/>
    <property type="evidence" value="ECO:0000316"/>
    <property type="project" value="MGI"/>
</dbReference>
<dbReference type="GO" id="GO:0032479">
    <property type="term" value="P:regulation of type I interferon production"/>
    <property type="evidence" value="ECO:0000316"/>
    <property type="project" value="MGI"/>
</dbReference>
<dbReference type="FunFam" id="1.10.1410.40:FF:000007">
    <property type="entry name" value="Cyclic GMP-AMP synthase"/>
    <property type="match status" value="1"/>
</dbReference>
<dbReference type="FunFam" id="3.30.460.90:FF:000005">
    <property type="entry name" value="Cyclic GMP-AMP synthase"/>
    <property type="match status" value="1"/>
</dbReference>
<dbReference type="Gene3D" id="1.10.1410.40">
    <property type="match status" value="1"/>
</dbReference>
<dbReference type="Gene3D" id="3.30.460.90">
    <property type="match status" value="1"/>
</dbReference>
<dbReference type="InterPro" id="IPR046903">
    <property type="entry name" value="Mab-21-like_nuc_Trfase"/>
</dbReference>
<dbReference type="InterPro" id="IPR046906">
    <property type="entry name" value="Mab-21_HhH/H2TH-like"/>
</dbReference>
<dbReference type="InterPro" id="IPR024810">
    <property type="entry name" value="MAB21L/cGLR"/>
</dbReference>
<dbReference type="PANTHER" id="PTHR10656">
    <property type="entry name" value="CELL FATE DETERMINING PROTEIN MAB21-RELATED"/>
    <property type="match status" value="1"/>
</dbReference>
<dbReference type="PANTHER" id="PTHR10656:SF35">
    <property type="entry name" value="CYCLIC GMP-AMP SYNTHASE"/>
    <property type="match status" value="1"/>
</dbReference>
<dbReference type="Pfam" id="PF03281">
    <property type="entry name" value="Mab-21"/>
    <property type="match status" value="1"/>
</dbReference>
<dbReference type="Pfam" id="PF20266">
    <property type="entry name" value="Mab-21_C"/>
    <property type="match status" value="1"/>
</dbReference>
<dbReference type="SMART" id="SM01265">
    <property type="entry name" value="Mab-21"/>
    <property type="match status" value="1"/>
</dbReference>
<keyword id="KW-0002">3D-structure</keyword>
<keyword id="KW-0007">Acetylation</keyword>
<keyword id="KW-0013">ADP-ribosylation</keyword>
<keyword id="KW-0051">Antiviral defense</keyword>
<keyword id="KW-0067">ATP-binding</keyword>
<keyword id="KW-1003">Cell membrane</keyword>
<keyword id="KW-0158">Chromosome</keyword>
<keyword id="KW-0963">Cytoplasm</keyword>
<keyword id="KW-0227">DNA damage</keyword>
<keyword id="KW-0234">DNA repair</keyword>
<keyword id="KW-0238">DNA-binding</keyword>
<keyword id="KW-0342">GTP-binding</keyword>
<keyword id="KW-0391">Immunity</keyword>
<keyword id="KW-0399">Innate immunity</keyword>
<keyword id="KW-1017">Isopeptide bond</keyword>
<keyword id="KW-0446">Lipid-binding</keyword>
<keyword id="KW-0449">Lipoprotein</keyword>
<keyword id="KW-0460">Magnesium</keyword>
<keyword id="KW-0472">Membrane</keyword>
<keyword id="KW-0479">Metal-binding</keyword>
<keyword id="KW-0488">Methylation</keyword>
<keyword id="KW-0547">Nucleotide-binding</keyword>
<keyword id="KW-0548">Nucleotidyltransferase</keyword>
<keyword id="KW-0539">Nucleus</keyword>
<keyword id="KW-0564">Palmitate</keyword>
<keyword id="KW-0597">Phosphoprotein</keyword>
<keyword id="KW-1185">Reference proteome</keyword>
<keyword id="KW-0808">Transferase</keyword>
<keyword id="KW-0832">Ubl conjugation</keyword>
<keyword id="KW-0862">Zinc</keyword>
<protein>
    <recommendedName>
        <fullName evidence="47">Cyclic GMP-AMP synthase</fullName>
        <shortName evidence="47">cGAMP synthase</shortName>
        <shortName evidence="47">cGAS</shortName>
        <shortName evidence="47">m-cGAS</shortName>
        <ecNumber evidence="4 22 25 26">2.7.7.86</ecNumber>
    </recommendedName>
    <alternativeName>
        <fullName evidence="47">2'3'-cGAMP synthase</fullName>
    </alternativeName>
    <alternativeName>
        <fullName evidence="48">Mab-21 domain-containing protein 1</fullName>
    </alternativeName>
</protein>
<sequence length="507" mass="58194">MEDPRRRTTAPRAKKPSAKRAPTQPSRTRAHAESCGPQRGARSRRAERDGDTTEKPRAPGPRVHPARATELTKDAQPSAMDAAGATARPAVRVPQQQAILDPELPAVREPQPPADPEARKVVRGPSHRRGARSTGQPRAPRGSRKEPDKLKKVLDKLRLKRKDISEAAETVNKVVERLLRRMQKRESEFKGVEQLNTGSYYEHVKISAPNEFDVMFKLEVPRIELQEYYETGAFYLVKFKRIPRGNPLSHFLEGEVLSATKMLSKFRKIIKEEVKEIKDIDVSVEKEKPGSPAVTLLIRNPEEISVDIILALESKGSWPISTKEGLPIQGWLGTKVRTNLRREPFYLVPKNAKDGNSFQGETWRLSFSHTEKYILNNHGIEKTCCESSGAKCCRKECLKLMKYLLEQLKKEFQELDAFCSYHVKTAIFHMWTQDPQDSQWDPRNLSSCFDKLLAFFLECLRTEKLDHYFIPKFNLFSQELIDRKSKEFLSKKIEYERNNGFPIFDKL</sequence>
<comment type="function">
    <text evidence="1 3 4 5 6 7 11 13 15 16 17 18 19 20 21 23 24 27 31 32 37 38 39 40 41 42 46">Nucleotidyltransferase that catalyzes the formation of cyclic GMP-AMP (2',3'-cGAMP) from ATP and GTP and plays a key role in innate immunity (PubMed:23258413, PubMed:23647843, PubMed:23722158, PubMed:26829768, PubMed:28214358, PubMed:29426904, PubMed:29625897, PubMed:32814054). Catalysis involves both the formation of a 2',5' phosphodiester linkage at the GpA step and the formation of a 3',5' phosphodiester linkage at the ApG step, producing c[G(2',5')pA(3',5')p] (PubMed:23258413, PubMed:23647843, PubMed:23722158, PubMed:26829768, PubMed:28214358). Acts as a key DNA sensor: directly binds double-stranded DNA (dsDNA), inducing the formation of liquid-like droplets in which CGAS is activated, leading to synthesis of 2',3'-cGAMP, a second messenger that binds to and activates STING1, thereby triggering type-I interferon production (PubMed:23722158, PubMed:28095500, PubMed:28314590, PubMed:28363908, PubMed:39322678). Preferentially binds long dsDNA (around 45 bp) and forms ladder-like networks that function cooperatively to stabilize individual cGAS-dsDNA complexes (PubMed:28902841). Acts as a key foreign DNA sensor, the presence of double-stranded DNA (dsDNA) in the cytoplasm being a danger signal that triggers the immune responses (PubMed:23722158, PubMed:28314590, PubMed:28363908). Has antiviral activity by sensing the presence of dsDNA from DNA viruses in the cytoplasm (PubMed:23258413, PubMed:23647843, PubMed:23722158). Also acts as an innate immune sensor of infection by retroviruses by detecting the presence of reverse-transcribed DNA in the cytosol (PubMed:23929945). Detection of retroviral reverse-transcribed DNA in the cytosol may be indirect and be mediated via interaction with PQBP1, which directly binds reverse-transcribed retroviral DNA (By similarity). Also detects the presence of DNA from bacteria (By similarity). 2',3'-cGAMP can be transferred from producing cells to neighboring cells through gap junctions, leading to promote STING1 activation and convey immune response to connecting cells (PubMed:24077100). 2',3'-cGAMP can also be transferred between cells by virtue of packaging within viral particles contributing to IFN-induction in newly infected cells in a cGAS-independent but STING1-dependent manner (PubMed:26229117). Also senses the presence of neutrophil extracellular traps (NETs) that are translocated to the cytosol following phagocytosis, leading to synthesis of 2',3'-cGAMP (PubMed:33688080). In addition to foreign DNA, can also be activated by endogenous nuclear or mitochondrial DNA (By similarity). When self-DNA leaks into the cytosol during cellular stress (such as mitochondrial stress, DNA damage, mitotic arrest or senescence), or is present in form of cytosolic micronuclei, CGAS is activated leading to a state of sterile inflammation (PubMed:28738408, PubMed:28759028). Acts as a regulator of cellular senescence by binding to cytosolic chromatin fragments that are present in senescent cells, leading to trigger type-I interferon production via STING1 and promote cellular senescence (PubMed:28759028). Also involved in the inflammatory response to genome instability and double-stranded DNA breaks: acts by localizing to micronuclei arising from genome instability (PubMed:28738408). Micronuclei, which as frequently found in cancer cells, consist of chromatin surrounded by its own nuclear membrane: following breakdown of the micronuclear envelope, a process associated with chromothripsis, CGAS binds self-DNA exposed to the cytosol, leading to 2',3'-cGAMP synthesis and subsequent activation of STING1 and type-I interferon production (PubMed:28738408). In a healthy cell, CGAS is however kept inactive even in cellular events that directly expose it to self-DNA, such as mitosis, when cGAS associates with chromatin directly after nuclear envelope breakdown or remains in the form of postmitotic persistent nuclear cGAS pools bound to chromatin (By similarity). Nuclear CGAS is inactivated by chromatin via direct interaction with nucleosomes, which block CGAS from DNA binding and thus prevent CGAS-induced autoimmunity (PubMed:31808743, PubMed:32911480, PubMed:32911481, PubMed:32913000). Also acts as a suppressor of DNA repair in response to DNA damage: inhibits homologous recombination repair by interacting with PARP1, the CGAS-PARP1 interaction leading to impede the formation of the PARP1-TIMELESS complex (PubMed:30356214, PubMed:31544964, PubMed:35210392). In addition to DNA, also sense translation stress: in response to translation stress, translocates to the cytosol and associates with collided ribosomes, promoting its activation and triggering type-I interferon production (By similarity).</text>
</comment>
<comment type="catalytic activity">
    <reaction evidence="4 22 25 26 37">
        <text>GTP + ATP = 2',3'-cGAMP + 2 diphosphate</text>
        <dbReference type="Rhea" id="RHEA:42064"/>
        <dbReference type="ChEBI" id="CHEBI:30616"/>
        <dbReference type="ChEBI" id="CHEBI:33019"/>
        <dbReference type="ChEBI" id="CHEBI:37565"/>
        <dbReference type="ChEBI" id="CHEBI:143093"/>
        <dbReference type="EC" id="2.7.7.86"/>
    </reaction>
    <physiologicalReaction direction="left-to-right" evidence="3">
        <dbReference type="Rhea" id="RHEA:42065"/>
    </physiologicalReaction>
</comment>
<comment type="catalytic activity">
    <reaction evidence="4 22 25 26 37">
        <text>GTP + ATP = pppGp(2'-5')A + diphosphate</text>
        <dbReference type="Rhea" id="RHEA:23748"/>
        <dbReference type="ChEBI" id="CHEBI:30616"/>
        <dbReference type="ChEBI" id="CHEBI:33019"/>
        <dbReference type="ChEBI" id="CHEBI:37565"/>
        <dbReference type="ChEBI" id="CHEBI:78318"/>
    </reaction>
    <physiologicalReaction direction="left-to-right" evidence="3">
        <dbReference type="Rhea" id="RHEA:23749"/>
    </physiologicalReaction>
</comment>
<comment type="catalytic activity">
    <reaction evidence="4 22 25 26 37">
        <text>pppGp(2'-5')A = 2',3'-cGAMP + diphosphate</text>
        <dbReference type="Rhea" id="RHEA:23924"/>
        <dbReference type="ChEBI" id="CHEBI:33019"/>
        <dbReference type="ChEBI" id="CHEBI:78318"/>
        <dbReference type="ChEBI" id="CHEBI:143093"/>
    </reaction>
    <physiologicalReaction direction="left-to-right" evidence="3">
        <dbReference type="Rhea" id="RHEA:23925"/>
    </physiologicalReaction>
</comment>
<comment type="cofactor">
    <cofactor evidence="4">
        <name>Mg(2+)</name>
        <dbReference type="ChEBI" id="CHEBI:18420"/>
    </cofactor>
    <cofactor evidence="4 37">
        <name>Mn(2+)</name>
        <dbReference type="ChEBI" id="CHEBI:29035"/>
    </cofactor>
    <text evidence="4 37">Binds 1 Mg(2+) per subunit (PubMed:23647843). Is also active with Mn(2+) (PubMed:23647843, PubMed:32814054). Mn(2+)-activated enzyme forms an inverted pppGp(2'-5')A intermediate, suggesting a non-canonical but accelerated 2',3'-cGAMP cyclization without substrate flip-over (PubMed:32814054). Mn(2+) ions are coordinated by triphosphate moiety of the inverted substrate, independent of the catalytic triad residues (PubMed:32814054).</text>
</comment>
<comment type="cofactor">
    <cofactor evidence="25 37 38 39 40">
        <name>Zn(2+)</name>
        <dbReference type="ChEBI" id="CHEBI:29105"/>
    </cofactor>
    <text evidence="1">Undergoes a liquid-like phase transition after binding to DNA, which is dependent on zinc.</text>
</comment>
<comment type="activity regulation">
    <text evidence="1 12 15 17 22 23 24 26 33 36 38 39 40 44 46">The enzyme activity is strongly increased by double-stranded DNA (dsDNA), but not by single-stranded DNA or RNA (By similarity). DNA-binding induces the formation of liquid-like droplets in which CGAS is activated (PubMed:39322678). Liquid-like droplets also create a selective environment that restricts entry of negative regulators, such as TREX1 or BANF1/BAF, allowing sensing of DNA (By similarity). A number of mechanisms exist to restrict its activity toward self-DNA (PubMed:32911480, PubMed:32911481, PubMed:32913000). The nucleotidyltransferase activity is inhibited in the nucleus via its association with nucleosomes: interacts with the acidic patch of histones H2A and H2B, thereby blocking DNA-binding and subsequent activation (PubMed:32156810, PubMed:32911480, PubMed:32911481, PubMed:32913000). CGAS is also inactive when associated with mitotic chromatin (By similarity). Chromatin-bound CGAS cannot be activated by exogenous DNA in mitotic cells: phosphorylation of the N-terminal disordered part by AURKB during the G2-M transition blocks CGAS liquid phase separation and activation (By similarity). Activity toward self-DNA is inhibited by BANF1/BAF upon acute loss of nuclear membrane integrity: BANF1/BAF acts by outcompeting CGAS for DNA-binding, thereby preventing CGAS activation (PubMed:32156810). DNA-induced activation at micronuclei is also limited by TREX1, which degrades micronuclear DNA upon nuclear envelope rupture, thereby preventing CGAS activation (By similarity). CGAS can be released from nucleosomes and activated by MRE11 component of the MRN complex, which displaces CGAS from acidic-patch-mediated sequestration (PubMed:38200309). Acetylation at Lys-372, Lys-382 and Lys-402 inhibits the cyclic GMP-AMP synthase activity (By similarity). Acetylation by KAT5 increases the cyclic GMP-AMP synthase activity by promoting DNA-binding and subsequent activation (By similarity). Phosphorylation at Ser-291 suppresses the nucleotidyltransferase activity (PubMed:26440888). Phosphorylation at Ser-420 promotes the cyclic GMP-AMP synthase activity (PubMed:32474700). Phosphorylation at Thr-52 and Ser-199 inhibits its cyclic GMP-AMP synthase activity (By similarity). Ubiquitination at Lys-372 via 'Lys-27'-linked polyubiquitination enhances the cyclic GMP-AMP synthase activity (By similarity). Monoubiquitination at Lys-335 promotes oligomerization and subsequent activation (PubMed:29426904). Sumoylation at Lys-335, Lys-372 and Lys-382 prevents DNA-binding, oligomerization and nucleotidyltransferase activity (PubMed:28095500). The enzyme activity is impaired by the cleavage by CASP1 (PubMed:28314590). In addition to DNA, also activated by collided ribosomes upon translation stress: specifically binds collided ribosomes, promoting its activation and triggering type-I interferon production (By similarity). In hematopoietic stem cells, binding to circular RNA cia-cGAS inhibits the cyclic GMP-AMP synthase activity (PubMed:29625897). Strongly inhibited by compound RU.521, which is specific for mouse protein (PubMed:28963528, PubMed:30007416).</text>
</comment>
<comment type="subunit">
    <text evidence="1 16 21 23 38 39 40 42">Monomer in the absence of DNA (PubMed:28214358). Homodimer in presence of dsDNA: forms a 2:2 dimer with two enzymes binding to two DNA molecules (PubMed:28902841, PubMed:29426904). Interacts with nucleosomes; interaction is mainly mediated via histones H2A and H2B and inactivates the nucleotidyltransferase activity by blocking DNA-binding and subsequent activation (PubMed:32911480, PubMed:32911481, PubMed:32913000). Interacts with PQBP1 (via WW domain) (By similarity). Interacts with TRIM14; this interaction recruits USP14, leading to deubiquitinate and stabilize CGAS and promote type I interferon production (By similarity). Interacts with ZCCHC3; promoting sensing of dsDNA by CGAS (By similarity). Interacts (when not monomethylated) with (poly-ADP-ribosylated) PARP1; interaction takes place in the nucleus and prevents the formation of the PARP1-TIMELESS complex (PubMed:35210392). Interacts (when monomethylated) with SGF29; interaction with SGF29 prevents interaction with PARP1 (PubMed:35210392). Interacts with PCBP2; preventing the formation of liquid-like droplets in which CGAS is activated (By similarity). Interacts with Irgm1; promoting CGAS degradation (By similarity). Interacts with DDX41 (By similarity).</text>
</comment>
<comment type="subcellular location">
    <subcellularLocation>
        <location evidence="31 32">Nucleus</location>
    </subcellularLocation>
    <subcellularLocation>
        <location evidence="31 38 39 40">Chromosome</location>
    </subcellularLocation>
    <subcellularLocation>
        <location evidence="28">Cell membrane</location>
        <topology evidence="28">Peripheral membrane protein</topology>
    </subcellularLocation>
    <subcellularLocation>
        <location evidence="3 31 32">Cytoplasm</location>
        <location evidence="3 31 32">Cytosol</location>
    </subcellularLocation>
    <text evidence="1 28 31 32">Mainly localizes in the nucleus, and at low level in the cytosol (PubMed:31544964, PubMed:31808743). On chromosomes, enriched on centromeric satellite and LINE DNA repeat elements (By similarity). Exported from the nucleus to the cytosol in a XPO1/CRM1 via the nuclear export signal in response to DNA stimulation (By similarity). Outside the nucleus, localizes at the cell membrane as a peripheral membrane protein in resting conditions: association to the cell membrane is mediated via binding to phosphatidylinositol 4,5-bisphosphate (PtdIns(4,5)P2) (PubMed:30827685). Localization at the cell membrane is required to limit the recognition of self-DNA (By similarity). Following detection of double-stranded DNA (dsDNA), released from the cell membrane into the cytosol in order to signal (By similarity). Upon transfection with dsDNA forms punctate structures that co-localize with DNA and Beclin-1 (BECN1) (By similarity). Phosphorylation at Tyr-201 promotes cytosolic retention (By similarity). In response to translation stress, translocates to the cytosol and associates with collided ribosomes (By similarity).</text>
</comment>
<comment type="domain">
    <text evidence="1 16 17 18">The N-terminal disordered part (1-146) binds unspecifically dsDNA and expand the binding and moving range of CGAS on dsDNA (PubMed:28214358, PubMed:28314590, PubMed:28363908). The disordered and positively charged residues enhance CGAS-DNA phase separation by increasing the valencies of DNA-binding (By similarity). The N-terminus is required to sense chromatin and its phosphorylation blocks its activation by chromatin DNA (By similarity). When the N-terminal part (1-146) is missing the protein bound to dsDNA homodimerizes (PubMed:28214358).</text>
</comment>
<comment type="domain">
    <text evidence="38 39 40">The arginine-anchor tightly binds to the canonical H2A acidic-patch residues.</text>
</comment>
<comment type="PTM">
    <text evidence="1 12 34 36">The N-terminal disordered part (1-146) is phosphorylated by AURKB during the G2-M transition, blocking CGAS liquid phase separation and preventing activation (By similarity). Phosphorylation at Tyr-201 by BLK promotes cytosolic retention (By similarity). Localizes into the nucleus following dephosphorylation at Tyr-201 (By similarity). Phosphorylation at Ser-420 activates the nucleotidyltransferase activity (PubMed:32474700). Dephosphorylation at Ser-420 by PPP6C impairs its ability to bind GTP, thereby inactivating it (PubMed:32474700). Phosphorylation at Thr-52 and Ser-199 by PRKDC inhibits its cyclic GMP-AMP synthase activity by impairing homodimerization and activation (By similarity). Phosphorylation at Ser-291 by AKT (AKT1, AKT2 or AKT3) suppresses the nucleotidyltransferase activity (PubMed:26440888). Phosphorylation at Ser-291 by CDK1 during mitosis leads to its inhibition, thereby preventing CGAS activation by self-DNA during mitosis (PubMed:32351706). Dephosphorylated at Ser-291 by protein phosphatase PP1 upon mitotic exit (PubMed:32351706).</text>
</comment>
<comment type="PTM">
    <text evidence="1 14 23 30 35 45">Ubiquitinated at Lys-402 via 'Lys-48'-linked polyubiquitin chains, leading to its SQSTM1-mediated autophagic degradation (By similarity). Interaction with TRIM14 promotes recruitment of USP14, leading to deubiquitinate Lys-402 and stabilize CGAS (By similarity). Ubiquitinated at Lys-372 by RNF185 via 'Lys-27'-linked polyubiquitination, promoting CGAS cyclic GMP-AMP synthase activity (By similarity). Monoubiquitination at Lys-335 by TRIM56 promotes oligomerization and subsequent activation (PubMed:29426904). Monoubiquitination by TRIM41 promotes CGAS activation (By similarity). Ubiquitination at Lys-271 and Lys-464 via 'Lys-48'-linked polyubiquitination promotes its degradation (PubMed:27637147, PubMed:32457395). Deubiquitination at Lys-271 by USP29 promotes its stabilization (PubMed:32457395). Deubiquitinated by USP27X, promoting its stabilization (PubMed:31534008). Ubiquitinated at Lys-399 via 'Lys-63'-linked polyubiquitin chains by MARCHF8, leading to the inhibition of its DNA binding ability (By similarity). In cycling cells, nucleosome-bound CGAS is ubiquitinated at Lys-409 and Lys-410 via 'Lys-48'-linked polyubiquitin chains by the ECS(SPSB3) complex, leading to its degradation: ubiquitination and degradation of nuclear CGAS during G1 and G2 phases is required to promote low intranuclear CGAS abundance before the next mitotic cycle (PubMed:38418882).</text>
</comment>
<comment type="PTM">
    <text evidence="14 15">Sumoylated at Lys-217 and Lys-464 by TRIM38 in uninfected cells and during the early phase of viral infection, promoting its stability by preventing ubiquitination at Lys-271 and Lys-464, and subsequent degradation (PubMed:27637147). Desumoylated by SENP2 during the late phase of viral infection (PubMed:27637147). Sumoylation at Lys-335, Lys-372 and Lys-382 prevents DNA-binding, oligomerization and nucleotidyltransferase activity (PubMed:28095500). Desumoylation at Lys-335, Lys-372 and Lys-382 by SENP7 relieves inhibition and activates CGAS (PubMed:28095500).</text>
</comment>
<comment type="PTM">
    <text evidence="13">Polyglutamylated by TTLL6 at Glu-272, leading to impair DNA-binding activity. Monoglutamylated at Glu-302 by TTLL4, leading to impair the nucleotidyltransferase activity. Deglutamylated by AGBL5/CCP5 and AGBL6/CCP6.</text>
</comment>
<comment type="PTM">
    <text evidence="1">Acetylation at Lys-372, Lys-382 and Lys-402 inhibits the cyclic GMP-AMP synthase activity. Deacetylated upon cytosolic DNA challenge such as viral infections. Acetylation by KAT5 increases the cyclic GMP-AMP synthase activity by promoting DNA-binding and subsequent activation.</text>
</comment>
<comment type="PTM">
    <text evidence="10 17 29">Proteolytically cleaved by apoptotic caspases during apoptosis, leading to its inactivation (PubMed:25525874, PubMed:30878284). The damage of the nucleus and the mitochondria during apoptosis leads to leakage of nuclear and mitochondrial DNA, which activate CGAS: cleavage and inactivation during apoptosis in required to prevent cytokine overproduction (PubMed:25525874). Cleaved by CASP7 and CASP3 during virus-induced apoptosis, thereby inactivating it and preventing cytokine overproduction (PubMed:30878284). Cleaved by CASP1 upon DNA virus infection; the cleavage impairs cGAMP production (PubMed:28314590). Also cleaved by the pyroptotic CASP4 during non-canonical inflammasome activation; does not cut at the same sites than CASP1 (PubMed:28314590).</text>
</comment>
<comment type="PTM">
    <text evidence="1">Degraded via selective autophagy following interaction with Irgm1. Irgm1 promotes CGAS recruitment to autophagosome membranes, promoting its SQSTM1/p62-dependent autophagic degradation.</text>
</comment>
<comment type="PTM">
    <text evidence="43">Poly-ADP-ribosylation at Glu-176 by PARP1 impairs DNA-binding, thereby preventing the cyclic GMP-AMP synthase activity.</text>
</comment>
<comment type="PTM">
    <text evidence="1">Palmitoylation at Cys-459 by ZDHHC18 impairs DNA-binding, thereby preventing the cyclic GMP-AMP synthase activity (By similarity). Palmitoylation at Cys-392 and Cys-393 by ZDHHC9 promotes homodimerization and cyclic GMP-AMP synthase activity (By similarity). Depalmitoylation at Cys-392 and Cys-393 by LYPLAL1 impairs homodimerization and cyclic GMP-AMP synthase activity (By similarity).</text>
</comment>
<comment type="PTM">
    <text evidence="42">Monomethylated at Lys-491 by SETD7 (PubMed:35210392). Monomethylation promotes interaction with SGF29, preventing interaction between PARP1 nad SGF29 (PubMed:35210392). Demethylation by RIOX1 promotes interaction with PARP1, followed by PARP1 inactivation (PubMed:35210392).</text>
</comment>
<comment type="PTM">
    <text evidence="46">Lactylation by AARS2 prevents ability to undergo liquid-liquid phase separation (LLPS), thereby inhibiting CGAS activation.</text>
</comment>
<comment type="similarity">
    <text evidence="48">Belongs to the mab-21 family.</text>
</comment>
<comment type="caution">
    <text evidence="8">Was reported to homodimerize in presence of double-stranded DNA (dsDNA) (PubMed:24332030). However, this result was based on a structure lacking the N-terminal part (1-146), which caused homodimerization in presence of dsDNA (PubMed:28214358).</text>
</comment>
<evidence type="ECO:0000250" key="1">
    <source>
        <dbReference type="UniProtKB" id="Q8N884"/>
    </source>
</evidence>
<evidence type="ECO:0000256" key="2">
    <source>
        <dbReference type="SAM" id="MobiDB-lite"/>
    </source>
</evidence>
<evidence type="ECO:0000269" key="3">
    <source>
    </source>
</evidence>
<evidence type="ECO:0000269" key="4">
    <source>
    </source>
</evidence>
<evidence type="ECO:0000269" key="5">
    <source>
    </source>
</evidence>
<evidence type="ECO:0000269" key="6">
    <source>
    </source>
</evidence>
<evidence type="ECO:0000269" key="7">
    <source>
    </source>
</evidence>
<evidence type="ECO:0000269" key="8">
    <source>
    </source>
</evidence>
<evidence type="ECO:0000269" key="9">
    <source>
    </source>
</evidence>
<evidence type="ECO:0000269" key="10">
    <source>
    </source>
</evidence>
<evidence type="ECO:0000269" key="11">
    <source>
    </source>
</evidence>
<evidence type="ECO:0000269" key="12">
    <source>
    </source>
</evidence>
<evidence type="ECO:0000269" key="13">
    <source>
    </source>
</evidence>
<evidence type="ECO:0000269" key="14">
    <source>
    </source>
</evidence>
<evidence type="ECO:0000269" key="15">
    <source>
    </source>
</evidence>
<evidence type="ECO:0000269" key="16">
    <source>
    </source>
</evidence>
<evidence type="ECO:0000269" key="17">
    <source>
    </source>
</evidence>
<evidence type="ECO:0000269" key="18">
    <source>
    </source>
</evidence>
<evidence type="ECO:0000269" key="19">
    <source>
    </source>
</evidence>
<evidence type="ECO:0000269" key="20">
    <source>
    </source>
</evidence>
<evidence type="ECO:0000269" key="21">
    <source>
    </source>
</evidence>
<evidence type="ECO:0000269" key="22">
    <source>
    </source>
</evidence>
<evidence type="ECO:0000269" key="23">
    <source>
    </source>
</evidence>
<evidence type="ECO:0000269" key="24">
    <source>
    </source>
</evidence>
<evidence type="ECO:0000269" key="25">
    <source>
    </source>
</evidence>
<evidence type="ECO:0000269" key="26">
    <source>
    </source>
</evidence>
<evidence type="ECO:0000269" key="27">
    <source>
    </source>
</evidence>
<evidence type="ECO:0000269" key="28">
    <source>
    </source>
</evidence>
<evidence type="ECO:0000269" key="29">
    <source>
    </source>
</evidence>
<evidence type="ECO:0000269" key="30">
    <source>
    </source>
</evidence>
<evidence type="ECO:0000269" key="31">
    <source>
    </source>
</evidence>
<evidence type="ECO:0000269" key="32">
    <source>
    </source>
</evidence>
<evidence type="ECO:0000269" key="33">
    <source>
    </source>
</evidence>
<evidence type="ECO:0000269" key="34">
    <source>
    </source>
</evidence>
<evidence type="ECO:0000269" key="35">
    <source>
    </source>
</evidence>
<evidence type="ECO:0000269" key="36">
    <source>
    </source>
</evidence>
<evidence type="ECO:0000269" key="37">
    <source>
    </source>
</evidence>
<evidence type="ECO:0000269" key="38">
    <source>
    </source>
</evidence>
<evidence type="ECO:0000269" key="39">
    <source>
    </source>
</evidence>
<evidence type="ECO:0000269" key="40">
    <source>
    </source>
</evidence>
<evidence type="ECO:0000269" key="41">
    <source>
    </source>
</evidence>
<evidence type="ECO:0000269" key="42">
    <source>
    </source>
</evidence>
<evidence type="ECO:0000269" key="43">
    <source>
    </source>
</evidence>
<evidence type="ECO:0000269" key="44">
    <source>
    </source>
</evidence>
<evidence type="ECO:0000269" key="45">
    <source>
    </source>
</evidence>
<evidence type="ECO:0000269" key="46">
    <source>
    </source>
</evidence>
<evidence type="ECO:0000303" key="47">
    <source>
    </source>
</evidence>
<evidence type="ECO:0000305" key="48"/>
<evidence type="ECO:0000312" key="49">
    <source>
        <dbReference type="MGI" id="MGI:2442261"/>
    </source>
</evidence>
<evidence type="ECO:0007744" key="50">
    <source>
        <dbReference type="PDB" id="4LEZ"/>
    </source>
</evidence>
<evidence type="ECO:0007744" key="51">
    <source>
        <dbReference type="PDB" id="5N6I"/>
    </source>
</evidence>
<evidence type="ECO:0007744" key="52">
    <source>
        <dbReference type="PDB" id="5XZB"/>
    </source>
</evidence>
<evidence type="ECO:0007744" key="53">
    <source>
        <dbReference type="PDB" id="5XZE"/>
    </source>
</evidence>
<evidence type="ECO:0007744" key="54">
    <source>
        <dbReference type="PDB" id="5XZG"/>
    </source>
</evidence>
<evidence type="ECO:0007744" key="55">
    <source>
        <dbReference type="PDB" id="6X59"/>
    </source>
</evidence>
<evidence type="ECO:0007744" key="56">
    <source>
        <dbReference type="PDB" id="6X5A"/>
    </source>
</evidence>
<evidence type="ECO:0007744" key="57">
    <source>
        <dbReference type="PDB" id="6XJD"/>
    </source>
</evidence>
<evidence type="ECO:0007744" key="58">
    <source>
        <dbReference type="PDB" id="7A08"/>
    </source>
</evidence>
<evidence type="ECO:0007744" key="59">
    <source>
        <dbReference type="PDB" id="7BUJ"/>
    </source>
</evidence>
<evidence type="ECO:0007744" key="60">
    <source>
        <dbReference type="PDB" id="7BUM"/>
    </source>
</evidence>
<evidence type="ECO:0007744" key="61">
    <source>
        <dbReference type="PDB" id="7BUQ"/>
    </source>
</evidence>
<evidence type="ECO:0007744" key="62">
    <source>
        <dbReference type="PDB" id="7JO9"/>
    </source>
</evidence>
<evidence type="ECO:0007744" key="63">
    <source>
        <dbReference type="PDB" id="7JOA"/>
    </source>
</evidence>
<evidence type="ECO:0007829" key="64">
    <source>
        <dbReference type="PDB" id="4K98"/>
    </source>
</evidence>
<evidence type="ECO:0007829" key="65">
    <source>
        <dbReference type="PDB" id="4O6A"/>
    </source>
</evidence>
<evidence type="ECO:0007829" key="66">
    <source>
        <dbReference type="PDB" id="5XZG"/>
    </source>
</evidence>
<evidence type="ECO:0007829" key="67">
    <source>
        <dbReference type="PDB" id="6X59"/>
    </source>
</evidence>
<evidence type="ECO:0007829" key="68">
    <source>
        <dbReference type="PDB" id="7A08"/>
    </source>
</evidence>
<evidence type="ECO:0007829" key="69">
    <source>
        <dbReference type="PDB" id="7BUJ"/>
    </source>
</evidence>
<evidence type="ECO:0007829" key="70">
    <source>
        <dbReference type="PDB" id="7BUM"/>
    </source>
</evidence>
<evidence type="ECO:0007829" key="71">
    <source>
        <dbReference type="PDB" id="8SHK"/>
    </source>
</evidence>
<evidence type="ECO:0007829" key="72">
    <source>
        <dbReference type="PDB" id="8SHU"/>
    </source>
</evidence>
<feature type="chain" id="PRO_0000421764" description="Cyclic GMP-AMP synthase">
    <location>
        <begin position="1"/>
        <end position="507"/>
    </location>
</feature>
<feature type="region of interest" description="Disordered" evidence="2">
    <location>
        <begin position="1"/>
        <end position="151"/>
    </location>
</feature>
<feature type="region of interest" description="DNA-binding" evidence="18">
    <location>
        <begin position="1"/>
        <end position="146"/>
    </location>
</feature>
<feature type="region of interest" description="Required for association with the cell membrane" evidence="1">
    <location>
        <begin position="48"/>
        <end position="59"/>
    </location>
</feature>
<feature type="region of interest" description="Required for activation upon DNA viral infection" evidence="17">
    <location>
        <begin position="119"/>
        <end position="132"/>
    </location>
</feature>
<feature type="region of interest" description="DNA-binding" evidence="4 21 22 51">
    <location>
        <begin position="158"/>
        <end position="201"/>
    </location>
</feature>
<feature type="region of interest" description="Interaction with collided ribosomes" evidence="1">
    <location>
        <begin position="329"/>
        <end position="370"/>
    </location>
</feature>
<feature type="region of interest" description="DNA-binding" evidence="4 21 22 51">
    <location>
        <begin position="372"/>
        <end position="395"/>
    </location>
</feature>
<feature type="short sequence motif" description="Nuclear export signal" evidence="1">
    <location>
        <begin position="154"/>
        <end position="159"/>
    </location>
</feature>
<feature type="short sequence motif" description="Nuclear localization signal" evidence="1">
    <location>
        <begin position="281"/>
        <end position="291"/>
    </location>
</feature>
<feature type="compositionally biased region" description="Basic residues" evidence="2">
    <location>
        <begin position="7"/>
        <end position="18"/>
    </location>
</feature>
<feature type="compositionally biased region" description="Basic and acidic residues" evidence="2">
    <location>
        <begin position="44"/>
        <end position="57"/>
    </location>
</feature>
<feature type="compositionally biased region" description="Basic residues" evidence="2">
    <location>
        <begin position="121"/>
        <end position="131"/>
    </location>
</feature>
<feature type="binding site" evidence="4">
    <location>
        <position position="197"/>
    </location>
    <ligand>
        <name>GTP</name>
        <dbReference type="ChEBI" id="CHEBI:37565"/>
    </ligand>
</feature>
<feature type="binding site" evidence="4">
    <location>
        <position position="199"/>
    </location>
    <ligand>
        <name>ATP</name>
        <dbReference type="ChEBI" id="CHEBI:30616"/>
    </ligand>
</feature>
<feature type="binding site" evidence="4">
    <location>
        <position position="211"/>
    </location>
    <ligand>
        <name>Mg(2+)</name>
        <dbReference type="ChEBI" id="CHEBI:18420"/>
        <note>catalytic</note>
    </ligand>
</feature>
<feature type="binding site" evidence="8 50">
    <location>
        <position position="213"/>
    </location>
    <ligand>
        <name>2',3'-cGAMP</name>
        <dbReference type="ChEBI" id="CHEBI:143093"/>
    </ligand>
</feature>
<feature type="binding site" evidence="4">
    <location>
        <position position="213"/>
    </location>
    <ligand>
        <name>Mg(2+)</name>
        <dbReference type="ChEBI" id="CHEBI:18420"/>
        <note>catalytic</note>
    </ligand>
</feature>
<feature type="binding site" evidence="8 50">
    <location>
        <position position="290"/>
    </location>
    <ligand>
        <name>2',3'-cGAMP</name>
        <dbReference type="ChEBI" id="CHEBI:143093"/>
    </ligand>
</feature>
<feature type="binding site" evidence="8 50">
    <location>
        <position position="307"/>
    </location>
    <ligand>
        <name>2',3'-cGAMP</name>
        <dbReference type="ChEBI" id="CHEBI:143093"/>
    </ligand>
</feature>
<feature type="binding site" evidence="4">
    <location>
        <position position="307"/>
    </location>
    <ligand>
        <name>GTP</name>
        <dbReference type="ChEBI" id="CHEBI:37565"/>
    </ligand>
</feature>
<feature type="binding site" evidence="4">
    <location>
        <position position="307"/>
    </location>
    <ligand>
        <name>Mg(2+)</name>
        <dbReference type="ChEBI" id="CHEBI:18420"/>
        <note>catalytic</note>
    </ligand>
</feature>
<feature type="binding site" evidence="8 50">
    <location>
        <position position="350"/>
    </location>
    <ligand>
        <name>2',3'-cGAMP</name>
        <dbReference type="ChEBI" id="CHEBI:143093"/>
    </ligand>
</feature>
<feature type="binding site" evidence="4">
    <location>
        <begin position="364"/>
        <end position="371"/>
    </location>
    <ligand>
        <name>GTP</name>
        <dbReference type="ChEBI" id="CHEBI:37565"/>
    </ligand>
</feature>
<feature type="binding site" evidence="8 50">
    <location>
        <begin position="364"/>
        <end position="366"/>
    </location>
    <ligand>
        <name>2',3'-cGAMP</name>
        <dbReference type="ChEBI" id="CHEBI:143093"/>
    </ligand>
</feature>
<feature type="binding site" evidence="4">
    <location>
        <position position="371"/>
    </location>
    <ligand>
        <name>ATP</name>
        <dbReference type="ChEBI" id="CHEBI:30616"/>
    </ligand>
</feature>
<feature type="binding site" evidence="4 8 9 21 22 37 39 40 51 52 53 54 55 59 60 61 62 63">
    <location>
        <position position="378"/>
    </location>
    <ligand>
        <name>Zn(2+)</name>
        <dbReference type="ChEBI" id="CHEBI:29105"/>
    </ligand>
</feature>
<feature type="binding site" evidence="4 8 9 21 22 37 39 40 51 52 53 54 55 59 60 61 62 63">
    <location>
        <position position="384"/>
    </location>
    <ligand>
        <name>Zn(2+)</name>
        <dbReference type="ChEBI" id="CHEBI:29105"/>
    </ligand>
</feature>
<feature type="binding site" evidence="4 8 9 21 22 37 39 40 51 52 53 54 57 59 60 61 62 63">
    <location>
        <position position="385"/>
    </location>
    <ligand>
        <name>Zn(2+)</name>
        <dbReference type="ChEBI" id="CHEBI:29105"/>
    </ligand>
</feature>
<feature type="binding site" evidence="4 8 9 21 22 37 38 39 40 51 52 53 54 56 59 60 61 62 63">
    <location>
        <position position="392"/>
    </location>
    <ligand>
        <name>Zn(2+)</name>
        <dbReference type="ChEBI" id="CHEBI:29105"/>
    </ligand>
</feature>
<feature type="binding site" evidence="4">
    <location>
        <position position="402"/>
    </location>
    <ligand>
        <name>ATP</name>
        <dbReference type="ChEBI" id="CHEBI:30616"/>
    </ligand>
</feature>
<feature type="binding site" evidence="4">
    <location>
        <begin position="420"/>
        <end position="424"/>
    </location>
    <ligand>
        <name>ATP</name>
        <dbReference type="ChEBI" id="CHEBI:30616"/>
    </ligand>
</feature>
<feature type="site" description="Arginine-anchor" evidence="32 38 39 40">
    <location>
        <position position="241"/>
    </location>
</feature>
<feature type="site" description="Cleavage; by CASP3" evidence="1">
    <location>
        <begin position="307"/>
        <end position="308"/>
    </location>
</feature>
<feature type="modified residue" description="Phosphothreonine" evidence="1">
    <location>
        <position position="52"/>
    </location>
</feature>
<feature type="modified residue" description="N6-lactoyllysine" evidence="46">
    <location>
        <position position="156"/>
    </location>
</feature>
<feature type="modified residue" description="PolyADP-ribosyl glutamic acid" evidence="43">
    <location>
        <position position="176"/>
    </location>
</feature>
<feature type="modified residue" description="Phosphoserine" evidence="1">
    <location>
        <position position="199"/>
    </location>
</feature>
<feature type="modified residue" description="Phosphotyrosine" evidence="1">
    <location>
        <position position="201"/>
    </location>
</feature>
<feature type="modified residue" description="5-glutamyl polyglutamate" evidence="13">
    <location>
        <position position="272"/>
    </location>
</feature>
<feature type="modified residue" description="Phosphoserine; by CDK1 and PKB" evidence="12 34">
    <location>
        <position position="291"/>
    </location>
</feature>
<feature type="modified residue" description="5-glutamyl glutamate" evidence="13">
    <location>
        <position position="302"/>
    </location>
</feature>
<feature type="modified residue" description="N6-acetyllysine" evidence="1">
    <location>
        <position position="372"/>
    </location>
</feature>
<feature type="modified residue" description="N6-acetyllysine" evidence="1">
    <location>
        <position position="382"/>
    </location>
</feature>
<feature type="modified residue" description="N6-acetyllysine" evidence="1">
    <location>
        <position position="402"/>
    </location>
</feature>
<feature type="modified residue" description="Phosphoserine" evidence="36">
    <location>
        <position position="420"/>
    </location>
</feature>
<feature type="modified residue" description="N6-methyllysine" evidence="42">
    <location>
        <position position="491"/>
    </location>
</feature>
<feature type="lipid moiety-binding region" description="S-palmitoyl cysteine" evidence="1">
    <location>
        <position position="392"/>
    </location>
</feature>
<feature type="lipid moiety-binding region" description="S-palmitoyl cysteine" evidence="1">
    <location>
        <position position="393"/>
    </location>
</feature>
<feature type="lipid moiety-binding region" description="S-palmitoyl cysteine" evidence="1">
    <location>
        <position position="459"/>
    </location>
</feature>
<feature type="cross-link" description="Glycyl lysine isopeptide (Lys-Gly) (interchain with G-Cter in SUMO)" evidence="14">
    <location>
        <position position="217"/>
    </location>
</feature>
<feature type="cross-link" description="Glycyl lysine isopeptide (Lys-Gly) (interchain with G-Cter in ubiquitin)" evidence="14 35">
    <location>
        <position position="271"/>
    </location>
</feature>
<feature type="cross-link" description="Glycyl lysine isopeptide (Lys-Gly) (interchain with G-Cter in SUMO); alternate" evidence="15">
    <location>
        <position position="335"/>
    </location>
</feature>
<feature type="cross-link" description="Glycyl lysine isopeptide (Lys-Gly) (interchain with G-Cter in ubiquitin); alternate" evidence="23">
    <location>
        <position position="335"/>
    </location>
</feature>
<feature type="cross-link" description="Glycyl lysine isopeptide (Lys-Gly) (interchain with G-Cter in SUMO); alternate" evidence="15">
    <location>
        <position position="372"/>
    </location>
</feature>
<feature type="cross-link" description="Glycyl lysine isopeptide (Lys-Gly) (interchain with G-Cter in ubiquitin); alternate" evidence="1">
    <location>
        <position position="372"/>
    </location>
</feature>
<feature type="cross-link" description="Glycyl lysine isopeptide (Lys-Gly) (interchain with G-Cter in SUMO)" evidence="15">
    <location>
        <position position="382"/>
    </location>
</feature>
<feature type="cross-link" description="Glycyl lysine isopeptide (Lys-Gly) (interchain with G-Cter in ubiquitin)" evidence="1">
    <location>
        <position position="399"/>
    </location>
</feature>
<feature type="cross-link" description="Glycyl lysine isopeptide (Lys-Gly) (interchain with G-Cter in ubiquitin)" evidence="1">
    <location>
        <position position="402"/>
    </location>
</feature>
<feature type="cross-link" description="Glycyl lysine isopeptide (Lys-Gly) (interchain with G-Cter in ubiquitin)" evidence="45">
    <location>
        <position position="409"/>
    </location>
</feature>
<feature type="cross-link" description="Glycyl lysine isopeptide (Lys-Gly) (interchain with G-Cter in ubiquitin)" evidence="45">
    <location>
        <position position="410"/>
    </location>
</feature>
<feature type="cross-link" description="Glycyl lysine isopeptide (Lys-Gly) (interchain with G-Cter in SUMO); alternate" evidence="14">
    <location>
        <position position="464"/>
    </location>
</feature>
<feature type="cross-link" description="Glycyl lysine isopeptide (Lys-Gly) (interchain with G-Cter in ubiquitin); alternate" evidence="14 35">
    <location>
        <position position="464"/>
    </location>
</feature>
<feature type="mutagenesis site" description="Mimics lactylation; knockin mice show higher mortality following HSV-1 infection." evidence="46">
    <original>K</original>
    <variation>Q</variation>
    <location>
        <position position="156"/>
    </location>
</feature>
<feature type="mutagenesis site" description="Induces alteration of the DNA-binding surface and leads to decreased synthesis of cyclic GMP-AMP (cGAMP); when associated with L-180." evidence="26">
    <original>N</original>
    <variation>K</variation>
    <location>
        <position position="172"/>
    </location>
</feature>
<feature type="mutagenesis site" description="Abolished poly-ADP-ribosylation by PARP1, stimulating interferon production in knockin mice." evidence="43">
    <original>E</original>
    <variation>A</variation>
    <location>
        <position position="176"/>
    </location>
</feature>
<feature type="mutagenesis site" description="Induces alteration of the DNA-binding surface and leads to decreased synthesis of cyclic GMP-AMP (cGAMP); when associated with K-182." evidence="26">
    <original>R</original>
    <variation>L</variation>
    <location>
        <position position="180"/>
    </location>
</feature>
<feature type="mutagenesis site" description="Abolishes stimulation of interferon production; when associated with A-199." evidence="11">
    <original>G</original>
    <variation>A</variation>
    <location>
        <position position="198"/>
    </location>
</feature>
<feature type="mutagenesis site" description="Abolishes stimulation of interferon production; when associated with A-199." evidence="11">
    <original>S</original>
    <variation>A</variation>
    <location>
        <position position="199"/>
    </location>
</feature>
<feature type="mutagenesis site" description="Phosphomimetic mutant; reduced translocation to the nucleus following treatment with etoposide." evidence="42">
    <original>Y</original>
    <variation>E</variation>
    <location>
        <position position="201"/>
    </location>
</feature>
<feature type="mutagenesis site" description="Abolished nucleotidyltransferase activity. Does not affect nuclear localization and tethering to chromatin." evidence="32">
    <original>EFD</original>
    <variation>AFA</variation>
    <location>
        <begin position="211"/>
        <end position="213"/>
    </location>
</feature>
<feature type="mutagenesis site" description="Abolishes ability to promote type-I interferon production." evidence="3">
    <original>E</original>
    <variation>A</variation>
    <location>
        <position position="211"/>
    </location>
</feature>
<feature type="mutagenesis site" description="Abolishes ability to promote type-I interferon production." evidence="3">
    <original>D</original>
    <variation>A</variation>
    <location>
        <position position="213"/>
    </location>
</feature>
<feature type="mutagenesis site" description="Reduced sumoylation." evidence="14">
    <original>K</original>
    <variation>R</variation>
    <location>
        <position position="217"/>
    </location>
</feature>
<feature type="mutagenesis site" description="Impaired tethering to chromatin, leading to constitutive activation in the absence of DNA." evidence="32 38 39 40">
    <original>R</original>
    <variation>E</variation>
    <location>
        <position position="222"/>
    </location>
</feature>
<feature type="mutagenesis site" description="Does not affect interaction with nucleosomes." evidence="39">
    <original>K</original>
    <variation>E</variation>
    <location>
        <position position="238"/>
    </location>
</feature>
<feature type="mutagenesis site" description="Impaired tethering to chromatin, leading to constitutive activation in the absence of DNA." evidence="32 38 39 40">
    <original>K</original>
    <variation>E</variation>
    <location>
        <position position="240"/>
    </location>
</feature>
<feature type="mutagenesis site" description="Abolished tethering to chromatin, leading to strong constitutive activation in the absence of DNA." evidence="32 38 39 40">
    <original>R</original>
    <variation>E</variation>
    <location>
        <position position="241"/>
    </location>
</feature>
<feature type="mutagenesis site" description="Slightly decreased tethering to chromatin, leading to mild constitutive activation in the absence of DNA." evidence="32">
    <original>IPRGNP</original>
    <variation>SGSGSG</variation>
    <location>
        <begin position="242"/>
        <end position="247"/>
    </location>
</feature>
<feature type="mutagenesis site" description="Does not affect ability to bind poly-ADP-ribosylated PARP1." evidence="42">
    <original>RGNPLSH</original>
    <variation>AGNPLSA</variation>
    <location>
        <begin position="244"/>
        <end position="250"/>
    </location>
</feature>
<feature type="mutagenesis site" description="Slightly decreased tethering to chromatin. Does not affect interaction with nucleosomes." evidence="32 39">
    <original>R</original>
    <variation>E</variation>
    <location>
        <position position="244"/>
    </location>
</feature>
<feature type="mutagenesis site" description="Impaired deubiquitination by USP29. Does not affect sumoylation." evidence="14 35">
    <original>K</original>
    <variation>R</variation>
    <location>
        <position position="271"/>
    </location>
</feature>
<feature type="mutagenesis site" description="Increased DNA-binding activity." evidence="13">
    <original>E</original>
    <variation>A</variation>
    <location>
        <position position="272"/>
    </location>
</feature>
<feature type="mutagenesis site" description="Does not affect ability to bind poly-ADP-ribosylated PARP1." evidence="42">
    <original>KEIK</original>
    <variation>AEIA</variation>
    <location>
        <begin position="275"/>
        <end position="278"/>
    </location>
</feature>
<feature type="mutagenesis site" description="Does not affect ubiquitination by TRIM56." evidence="23">
    <original>K</original>
    <variation>R</variation>
    <location>
        <position position="278"/>
    </location>
</feature>
<feature type="mutagenesis site" description="Enhanced stimulation of interferon production." evidence="12">
    <original>S</original>
    <variation>A</variation>
    <location>
        <position position="291"/>
    </location>
</feature>
<feature type="mutagenesis site" description="Increased nucleotidyltransferase activity." evidence="13">
    <original>E</original>
    <variation>A</variation>
    <location>
        <position position="302"/>
    </location>
</feature>
<feature type="mutagenesis site" description="Slightly decreased interaction with nucleosomes." evidence="39">
    <original>K</original>
    <variation>E</variation>
    <location>
        <position position="315"/>
    </location>
</feature>
<feature type="mutagenesis site" description="Slightly decreased interaction with nucleosomes." evidence="39">
    <original>K</original>
    <variation>E</variation>
    <location>
        <position position="323"/>
    </location>
</feature>
<feature type="mutagenesis site" description="Decreased DNA-binding and subsequent activation. Does not affect nuclear localization and tethering to chromatin." evidence="32 39">
    <original>K</original>
    <variation>E</variation>
    <location>
        <position position="335"/>
    </location>
</feature>
<feature type="mutagenesis site" description="Abolished ubiquitination by TRIM56, leading to impaired homodimerization and activation. Does not affect sumoylation. Strongly reduced sumoylation; when associated with R-372 and R-382." evidence="14 15 23">
    <original>K</original>
    <variation>R</variation>
    <location>
        <position position="335"/>
    </location>
</feature>
<feature type="mutagenesis site" description="Strongly reduced interaction with nucleosomes." evidence="38">
    <original>R</original>
    <variation>E</variation>
    <location>
        <position position="337"/>
    </location>
</feature>
<feature type="mutagenesis site" description="Abolished interaction with nucleosomes." evidence="38 39">
    <original>R</original>
    <variation>E</variation>
    <location>
        <position position="341"/>
    </location>
</feature>
<feature type="mutagenesis site" description="Strongly decreased interaction with nucleosomes." evidence="38 39">
    <original>R</original>
    <variation>E</variation>
    <location>
        <position position="342"/>
    </location>
</feature>
<feature type="mutagenesis site" description="Does not affect ubiquitination by TRIM56." evidence="23">
    <original>K</original>
    <variation>R</variation>
    <location>
        <position position="350"/>
    </location>
</feature>
<feature type="mutagenesis site" description="Strongly reduced sumoylation; when associated with R-335 and R-382." evidence="15">
    <original>K</original>
    <variation>R</variation>
    <location>
        <position position="372"/>
    </location>
</feature>
<feature type="mutagenesis site" description="Decreased DNA-binding and abolished homodimerization. Does not affect nuclear localization and tethering to chromatin." evidence="32">
    <original>K</original>
    <variation>A</variation>
    <location>
        <position position="382"/>
    </location>
</feature>
<feature type="mutagenesis site" description="Slightly decreased interaction with nucleosomes." evidence="39">
    <original>K</original>
    <variation>E</variation>
    <location>
        <position position="382"/>
    </location>
</feature>
<feature type="mutagenesis site" description="Strongly reduced sumoylation; when associated with R-335 and R-372." evidence="15">
    <original>K</original>
    <variation>R</variation>
    <location>
        <position position="382"/>
    </location>
</feature>
<feature type="mutagenesis site" description="Abolished homodimerization and subsequent activation. Does not affect nuclear localization and tethering to chromatin." evidence="32">
    <original>E</original>
    <variation>A</variation>
    <location>
        <position position="386"/>
    </location>
</feature>
<feature type="mutagenesis site" description="Decreased DNA-binding and subsequent activation. Does not affect nuclear localization and tethering to chromatin." evidence="32">
    <original>KECLK</original>
    <variation>MECLM</variation>
    <location>
        <begin position="395"/>
        <end position="399"/>
    </location>
</feature>
<feature type="mutagenesis site" description="Does not affect ability to bind poly-ADP-ribosylated PARP1." evidence="42">
    <original>KLMK</original>
    <variation>ALMA</variation>
    <location>
        <begin position="399"/>
        <end position="402"/>
    </location>
</feature>
<feature type="mutagenesis site" description="Gains susceptibility to mouse-specific RU.521; when associated with N-467." evidence="26">
    <original>C</original>
    <variation>S</variation>
    <location>
        <position position="419"/>
    </location>
</feature>
<feature type="mutagenesis site" description="Decreased cyclic GMP-AMP synthase activity." evidence="36">
    <original>S</original>
    <variation>A</variation>
    <location>
        <position position="420"/>
    </location>
</feature>
<feature type="mutagenesis site" description="Phospho-mimetic mutant; increased cyclic GMP-AMP synthase activity." evidence="36">
    <original>S</original>
    <variation>D</variation>
    <location>
        <position position="420"/>
    </location>
</feature>
<feature type="mutagenesis site" description="Does not affect deubiquitination by USP29. Reduced sumoylation." evidence="14 35">
    <original>K</original>
    <variation>R</variation>
    <location>
        <position position="464"/>
    </location>
</feature>
<feature type="mutagenesis site" description="Gains susceptibility to mouse-specific RU.521; when associated with S-419." evidence="26">
    <original>H</original>
    <variation>N</variation>
    <location>
        <position position="467"/>
    </location>
</feature>
<feature type="mutagenesis site" description="Impaired ability to bind poly-ADP-ribosylated PARP1." evidence="42">
    <original>KKIEYER</original>
    <variation>AKAEYEA</variation>
    <location>
        <begin position="491"/>
        <end position="497"/>
    </location>
</feature>
<feature type="mutagenesis site" description="Abolished monomethylation, promoting interaction with PARP1." evidence="42">
    <original>K</original>
    <variation>R</variation>
    <location>
        <position position="491"/>
    </location>
</feature>
<feature type="mutagenesis site" description="Reduced ubiquitination by the ECS(SPSB3) complex, leading to increased stability in the nucleus." evidence="45">
    <original>NN</original>
    <variation>AA</variation>
    <location>
        <begin position="498"/>
        <end position="499"/>
    </location>
</feature>
<feature type="sequence conflict" description="In Ref. 2; BAE26335." evidence="48" ref="2">
    <original>R</original>
    <variation>I</variation>
    <location>
        <position position="6"/>
    </location>
</feature>
<feature type="sequence conflict" description="In Ref. 2; BAE26335." evidence="48" ref="2">
    <original>P</original>
    <variation>R</variation>
    <location>
        <position position="471"/>
    </location>
</feature>
<feature type="helix" evidence="71">
    <location>
        <begin position="147"/>
        <end position="184"/>
    </location>
</feature>
<feature type="strand" evidence="65">
    <location>
        <begin position="185"/>
        <end position="187"/>
    </location>
</feature>
<feature type="turn" evidence="71">
    <location>
        <begin position="188"/>
        <end position="191"/>
    </location>
</feature>
<feature type="strand" evidence="71">
    <location>
        <begin position="193"/>
        <end position="195"/>
    </location>
</feature>
<feature type="turn" evidence="71">
    <location>
        <begin position="199"/>
        <end position="203"/>
    </location>
</feature>
<feature type="strand" evidence="66">
    <location>
        <begin position="207"/>
        <end position="209"/>
    </location>
</feature>
<feature type="strand" evidence="71">
    <location>
        <begin position="211"/>
        <end position="219"/>
    </location>
</feature>
<feature type="strand" evidence="71">
    <location>
        <begin position="221"/>
        <end position="229"/>
    </location>
</feature>
<feature type="turn" evidence="67">
    <location>
        <begin position="230"/>
        <end position="232"/>
    </location>
</feature>
<feature type="strand" evidence="71">
    <location>
        <begin position="235"/>
        <end position="239"/>
    </location>
</feature>
<feature type="helix" evidence="71">
    <location>
        <begin position="249"/>
        <end position="251"/>
    </location>
</feature>
<feature type="strand" evidence="65">
    <location>
        <begin position="252"/>
        <end position="257"/>
    </location>
</feature>
<feature type="helix" evidence="71">
    <location>
        <begin position="259"/>
        <end position="274"/>
    </location>
</feature>
<feature type="strand" evidence="70">
    <location>
        <begin position="275"/>
        <end position="277"/>
    </location>
</feature>
<feature type="strand" evidence="71">
    <location>
        <begin position="279"/>
        <end position="284"/>
    </location>
</feature>
<feature type="strand" evidence="71">
    <location>
        <begin position="294"/>
        <end position="314"/>
    </location>
</feature>
<feature type="helix" evidence="71">
    <location>
        <begin position="320"/>
        <end position="322"/>
    </location>
</feature>
<feature type="turn" evidence="71">
    <location>
        <begin position="329"/>
        <end position="332"/>
    </location>
</feature>
<feature type="helix" evidence="71">
    <location>
        <begin position="334"/>
        <end position="341"/>
    </location>
</feature>
<feature type="strand" evidence="71">
    <location>
        <begin position="345"/>
        <end position="349"/>
    </location>
</feature>
<feature type="strand" evidence="64">
    <location>
        <begin position="352"/>
        <end position="354"/>
    </location>
</feature>
<feature type="strand" evidence="66">
    <location>
        <begin position="355"/>
        <end position="358"/>
    </location>
</feature>
<feature type="helix" evidence="65">
    <location>
        <begin position="359"/>
        <end position="361"/>
    </location>
</feature>
<feature type="strand" evidence="71">
    <location>
        <begin position="363"/>
        <end position="366"/>
    </location>
</feature>
<feature type="helix" evidence="71">
    <location>
        <begin position="368"/>
        <end position="376"/>
    </location>
</feature>
<feature type="strand" evidence="69">
    <location>
        <begin position="379"/>
        <end position="381"/>
    </location>
</feature>
<feature type="turn" evidence="71">
    <location>
        <begin position="382"/>
        <end position="385"/>
    </location>
</feature>
<feature type="strand" evidence="67">
    <location>
        <begin position="386"/>
        <end position="389"/>
    </location>
</feature>
<feature type="helix" evidence="71">
    <location>
        <begin position="394"/>
        <end position="411"/>
    </location>
</feature>
<feature type="helix" evidence="71">
    <location>
        <begin position="413"/>
        <end position="415"/>
    </location>
</feature>
<feature type="helix" evidence="71">
    <location>
        <begin position="420"/>
        <end position="433"/>
    </location>
</feature>
<feature type="helix" evidence="71">
    <location>
        <begin position="437"/>
        <end position="440"/>
    </location>
</feature>
<feature type="helix" evidence="71">
    <location>
        <begin position="442"/>
        <end position="444"/>
    </location>
</feature>
<feature type="helix" evidence="71">
    <location>
        <begin position="445"/>
        <end position="462"/>
    </location>
</feature>
<feature type="strand" evidence="72">
    <location>
        <begin position="468"/>
        <end position="470"/>
    </location>
</feature>
<feature type="strand" evidence="68">
    <location>
        <begin position="474"/>
        <end position="476"/>
    </location>
</feature>
<feature type="turn" evidence="71">
    <location>
        <begin position="478"/>
        <end position="480"/>
    </location>
</feature>
<feature type="helix" evidence="71">
    <location>
        <begin position="483"/>
        <end position="498"/>
    </location>
</feature>
<feature type="helix" evidence="71">
    <location>
        <begin position="502"/>
        <end position="505"/>
    </location>
</feature>
<gene>
    <name evidence="47 49" type="primary">Cgas</name>
    <name evidence="49" type="synonym">Mb21d1</name>
</gene>